<dbReference type="EC" id="2.7.10.2"/>
<dbReference type="EMBL" id="L13616">
    <property type="protein sequence ID" value="AAA58469.1"/>
    <property type="molecule type" value="mRNA"/>
</dbReference>
<dbReference type="EMBL" id="L05186">
    <property type="protein sequence ID" value="AAA35819.1"/>
    <property type="molecule type" value="mRNA"/>
</dbReference>
<dbReference type="EMBL" id="AK304356">
    <property type="protein sequence ID" value="BAG65198.1"/>
    <property type="molecule type" value="mRNA"/>
</dbReference>
<dbReference type="EMBL" id="AC067931">
    <property type="status" value="NOT_ANNOTATED_CDS"/>
    <property type="molecule type" value="Genomic_DNA"/>
</dbReference>
<dbReference type="EMBL" id="AC100860">
    <property type="status" value="NOT_ANNOTATED_CDS"/>
    <property type="molecule type" value="Genomic_DNA"/>
</dbReference>
<dbReference type="EMBL" id="AC105009">
    <property type="status" value="NOT_ANNOTATED_CDS"/>
    <property type="molecule type" value="Genomic_DNA"/>
</dbReference>
<dbReference type="EMBL" id="AC105235">
    <property type="status" value="NOT_ANNOTATED_CDS"/>
    <property type="molecule type" value="Genomic_DNA"/>
</dbReference>
<dbReference type="EMBL" id="KF458878">
    <property type="status" value="NOT_ANNOTATED_CDS"/>
    <property type="molecule type" value="Genomic_DNA"/>
</dbReference>
<dbReference type="EMBL" id="KF458882">
    <property type="status" value="NOT_ANNOTATED_CDS"/>
    <property type="molecule type" value="Genomic_DNA"/>
</dbReference>
<dbReference type="EMBL" id="BC035404">
    <property type="protein sequence ID" value="AAH35404.1"/>
    <property type="molecule type" value="mRNA"/>
</dbReference>
<dbReference type="CCDS" id="CCDS56557.1">
    <molecule id="Q05397-5"/>
</dbReference>
<dbReference type="CCDS" id="CCDS6381.1">
    <molecule id="Q05397-1"/>
</dbReference>
<dbReference type="PIR" id="I53012">
    <property type="entry name" value="I53012"/>
</dbReference>
<dbReference type="PIR" id="PC1225">
    <property type="entry name" value="PC1225"/>
</dbReference>
<dbReference type="RefSeq" id="NP_001186578.1">
    <molecule id="Q05397-5"/>
    <property type="nucleotide sequence ID" value="NM_001199649.2"/>
</dbReference>
<dbReference type="RefSeq" id="NP_001339623.1">
    <molecule id="Q05397-1"/>
    <property type="nucleotide sequence ID" value="NM_001352694.2"/>
</dbReference>
<dbReference type="RefSeq" id="NP_001374515.1">
    <molecule id="Q05397-1"/>
    <property type="nucleotide sequence ID" value="NM_001387586.1"/>
</dbReference>
<dbReference type="RefSeq" id="NP_001374516.1">
    <molecule id="Q05397-1"/>
    <property type="nucleotide sequence ID" value="NM_001387587.1"/>
</dbReference>
<dbReference type="RefSeq" id="NP_001374557.1">
    <molecule id="Q05397-1"/>
    <property type="nucleotide sequence ID" value="NM_001387628.1"/>
</dbReference>
<dbReference type="RefSeq" id="NP_001374565.1">
    <molecule id="Q05397-1"/>
    <property type="nucleotide sequence ID" value="NM_001387636.1"/>
</dbReference>
<dbReference type="RefSeq" id="NP_001374566.1">
    <molecule id="Q05397-1"/>
    <property type="nucleotide sequence ID" value="NM_001387637.1"/>
</dbReference>
<dbReference type="RefSeq" id="NP_001374571.1">
    <molecule id="Q05397-1"/>
    <property type="nucleotide sequence ID" value="NM_001387642.1"/>
</dbReference>
<dbReference type="RefSeq" id="NP_001374574.1">
    <molecule id="Q05397-1"/>
    <property type="nucleotide sequence ID" value="NM_001387645.1"/>
</dbReference>
<dbReference type="RefSeq" id="NP_001374576.1">
    <molecule id="Q05397-1"/>
    <property type="nucleotide sequence ID" value="NM_001387647.1"/>
</dbReference>
<dbReference type="RefSeq" id="NP_001374584.1">
    <molecule id="Q05397-1"/>
    <property type="nucleotide sequence ID" value="NM_001387655.1"/>
</dbReference>
<dbReference type="RefSeq" id="NP_001374586.1">
    <molecule id="Q05397-1"/>
    <property type="nucleotide sequence ID" value="NM_001387657.1"/>
</dbReference>
<dbReference type="RefSeq" id="NP_001374587.1">
    <molecule id="Q05397-1"/>
    <property type="nucleotide sequence ID" value="NM_001387658.1"/>
</dbReference>
<dbReference type="RefSeq" id="NP_722560.1">
    <molecule id="Q05397-1"/>
    <property type="nucleotide sequence ID" value="NM_153831.4"/>
</dbReference>
<dbReference type="RefSeq" id="XP_016869162.1">
    <property type="nucleotide sequence ID" value="XM_017013673.1"/>
</dbReference>
<dbReference type="PDB" id="1K04">
    <property type="method" value="X-ray"/>
    <property type="resolution" value="1.95 A"/>
    <property type="chains" value="A=891-1052"/>
</dbReference>
<dbReference type="PDB" id="1K05">
    <property type="method" value="X-ray"/>
    <property type="resolution" value="2.90 A"/>
    <property type="chains" value="A/B/C=891-1052"/>
</dbReference>
<dbReference type="PDB" id="1MP8">
    <property type="method" value="X-ray"/>
    <property type="resolution" value="1.60 A"/>
    <property type="chains" value="A=411-686"/>
</dbReference>
<dbReference type="PDB" id="1OW6">
    <property type="method" value="X-ray"/>
    <property type="resolution" value="2.35 A"/>
    <property type="chains" value="A/B/C=892-1052"/>
</dbReference>
<dbReference type="PDB" id="1OW7">
    <property type="method" value="X-ray"/>
    <property type="resolution" value="2.60 A"/>
    <property type="chains" value="A/B/C=892-1052"/>
</dbReference>
<dbReference type="PDB" id="1OW8">
    <property type="method" value="X-ray"/>
    <property type="resolution" value="2.85 A"/>
    <property type="chains" value="A/B/C=892-1052"/>
</dbReference>
<dbReference type="PDB" id="2ETM">
    <property type="method" value="X-ray"/>
    <property type="resolution" value="2.30 A"/>
    <property type="chains" value="A/B=411-689"/>
</dbReference>
<dbReference type="PDB" id="2IJM">
    <property type="method" value="X-ray"/>
    <property type="resolution" value="2.19 A"/>
    <property type="chains" value="A/B=411-689"/>
</dbReference>
<dbReference type="PDB" id="3B71">
    <property type="method" value="X-ray"/>
    <property type="resolution" value="2.82 A"/>
    <property type="chains" value="A/B/C=891-1052"/>
</dbReference>
<dbReference type="PDB" id="3BZ3">
    <property type="method" value="X-ray"/>
    <property type="resolution" value="2.20 A"/>
    <property type="chains" value="A=414-689"/>
</dbReference>
<dbReference type="PDB" id="3PXK">
    <property type="method" value="X-ray"/>
    <property type="resolution" value="1.79 A"/>
    <property type="chains" value="A/B=411-689"/>
</dbReference>
<dbReference type="PDB" id="3S9O">
    <property type="method" value="X-ray"/>
    <property type="resolution" value="2.60 A"/>
    <property type="chains" value="A/B/C=891-1052"/>
</dbReference>
<dbReference type="PDB" id="4EBV">
    <property type="method" value="X-ray"/>
    <property type="resolution" value="1.67 A"/>
    <property type="chains" value="A=411-686"/>
</dbReference>
<dbReference type="PDB" id="4EBW">
    <property type="method" value="X-ray"/>
    <property type="resolution" value="2.65 A"/>
    <property type="chains" value="A=411-686"/>
</dbReference>
<dbReference type="PDB" id="4GU6">
    <property type="method" value="X-ray"/>
    <property type="resolution" value="1.95 A"/>
    <property type="chains" value="A/B=411-689"/>
</dbReference>
<dbReference type="PDB" id="4GU9">
    <property type="method" value="X-ray"/>
    <property type="resolution" value="2.40 A"/>
    <property type="chains" value="A/B=410-686"/>
</dbReference>
<dbReference type="PDB" id="4I4E">
    <property type="method" value="X-ray"/>
    <property type="resolution" value="1.55 A"/>
    <property type="chains" value="A=411-686"/>
</dbReference>
<dbReference type="PDB" id="4I4F">
    <property type="method" value="X-ray"/>
    <property type="resolution" value="1.75 A"/>
    <property type="chains" value="A=411-686"/>
</dbReference>
<dbReference type="PDB" id="4K8A">
    <property type="method" value="X-ray"/>
    <property type="resolution" value="2.91 A"/>
    <property type="chains" value="A/B=410-686"/>
</dbReference>
<dbReference type="PDB" id="4K9Y">
    <property type="method" value="X-ray"/>
    <property type="resolution" value="2.00 A"/>
    <property type="chains" value="A=410-686"/>
</dbReference>
<dbReference type="PDB" id="4KAB">
    <property type="method" value="X-ray"/>
    <property type="resolution" value="2.71 A"/>
    <property type="chains" value="A/B=410-686"/>
</dbReference>
<dbReference type="PDB" id="4KAO">
    <property type="method" value="X-ray"/>
    <property type="resolution" value="2.39 A"/>
    <property type="chains" value="A/B=410-689"/>
</dbReference>
<dbReference type="PDB" id="4NY0">
    <property type="method" value="X-ray"/>
    <property type="resolution" value="2.80 A"/>
    <property type="chains" value="A/B/C/D=31-405"/>
</dbReference>
<dbReference type="PDB" id="4Q9S">
    <property type="method" value="X-ray"/>
    <property type="resolution" value="2.07 A"/>
    <property type="chains" value="A=411-686"/>
</dbReference>
<dbReference type="PDB" id="6I8Z">
    <property type="method" value="X-ray"/>
    <property type="resolution" value="1.99 A"/>
    <property type="chains" value="A=411-689"/>
</dbReference>
<dbReference type="PDB" id="6LES">
    <property type="method" value="X-ray"/>
    <property type="resolution" value="2.00 A"/>
    <property type="chains" value="A/B/X/Y=805-832"/>
</dbReference>
<dbReference type="PDB" id="6PW8">
    <property type="method" value="X-ray"/>
    <property type="resolution" value="1.95 A"/>
    <property type="chains" value="A=922-1047"/>
</dbReference>
<dbReference type="PDB" id="6YOJ">
    <property type="method" value="X-ray"/>
    <property type="resolution" value="1.36 A"/>
    <property type="chains" value="A=411-689"/>
</dbReference>
<dbReference type="PDB" id="6YQ1">
    <property type="method" value="X-ray"/>
    <property type="resolution" value="1.78 A"/>
    <property type="chains" value="A/B/C/D=411-689"/>
</dbReference>
<dbReference type="PDB" id="6YR9">
    <property type="method" value="X-ray"/>
    <property type="resolution" value="1.93 A"/>
    <property type="chains" value="A/B/C/D=411-689"/>
</dbReference>
<dbReference type="PDB" id="6YT6">
    <property type="method" value="X-ray"/>
    <property type="resolution" value="1.54 A"/>
    <property type="chains" value="A/B=411-689"/>
</dbReference>
<dbReference type="PDB" id="6YVS">
    <property type="method" value="X-ray"/>
    <property type="resolution" value="1.81 A"/>
    <property type="chains" value="A/B/C/D=411-689"/>
</dbReference>
<dbReference type="PDB" id="6YVY">
    <property type="method" value="X-ray"/>
    <property type="resolution" value="1.92 A"/>
    <property type="chains" value="A/B/C/D=411-689"/>
</dbReference>
<dbReference type="PDB" id="6YXV">
    <property type="method" value="X-ray"/>
    <property type="resolution" value="2.30 A"/>
    <property type="chains" value="A/B/C/D=411-689"/>
</dbReference>
<dbReference type="PDB" id="7PI4">
    <property type="method" value="X-ray"/>
    <property type="resolution" value="2.24 A"/>
    <property type="chains" value="DDD=415-687"/>
</dbReference>
<dbReference type="PDB" id="7W7Z">
    <property type="method" value="X-ray"/>
    <property type="resolution" value="2.15 A"/>
    <property type="chains" value="A=892-1052"/>
</dbReference>
<dbReference type="PDB" id="7W8B">
    <property type="method" value="X-ray"/>
    <property type="resolution" value="2.09 A"/>
    <property type="chains" value="A=892-1052"/>
</dbReference>
<dbReference type="PDB" id="7W8I">
    <property type="method" value="X-ray"/>
    <property type="resolution" value="1.94 A"/>
    <property type="chains" value="A=892-1052"/>
</dbReference>
<dbReference type="PDB" id="7W9U">
    <property type="method" value="X-ray"/>
    <property type="resolution" value="2.16 A"/>
    <property type="chains" value="A/B/C/D=892-1052"/>
</dbReference>
<dbReference type="PDBsum" id="1K04"/>
<dbReference type="PDBsum" id="1K05"/>
<dbReference type="PDBsum" id="1MP8"/>
<dbReference type="PDBsum" id="1OW6"/>
<dbReference type="PDBsum" id="1OW7"/>
<dbReference type="PDBsum" id="1OW8"/>
<dbReference type="PDBsum" id="2ETM"/>
<dbReference type="PDBsum" id="2IJM"/>
<dbReference type="PDBsum" id="3B71"/>
<dbReference type="PDBsum" id="3BZ3"/>
<dbReference type="PDBsum" id="3PXK"/>
<dbReference type="PDBsum" id="3S9O"/>
<dbReference type="PDBsum" id="4EBV"/>
<dbReference type="PDBsum" id="4EBW"/>
<dbReference type="PDBsum" id="4GU6"/>
<dbReference type="PDBsum" id="4GU9"/>
<dbReference type="PDBsum" id="4I4E"/>
<dbReference type="PDBsum" id="4I4F"/>
<dbReference type="PDBsum" id="4K8A"/>
<dbReference type="PDBsum" id="4K9Y"/>
<dbReference type="PDBsum" id="4KAB"/>
<dbReference type="PDBsum" id="4KAO"/>
<dbReference type="PDBsum" id="4NY0"/>
<dbReference type="PDBsum" id="4Q9S"/>
<dbReference type="PDBsum" id="6I8Z"/>
<dbReference type="PDBsum" id="6LES"/>
<dbReference type="PDBsum" id="6PW8"/>
<dbReference type="PDBsum" id="6YOJ"/>
<dbReference type="PDBsum" id="6YQ1"/>
<dbReference type="PDBsum" id="6YR9"/>
<dbReference type="PDBsum" id="6YT6"/>
<dbReference type="PDBsum" id="6YVS"/>
<dbReference type="PDBsum" id="6YVY"/>
<dbReference type="PDBsum" id="6YXV"/>
<dbReference type="PDBsum" id="7PI4"/>
<dbReference type="PDBsum" id="7W7Z"/>
<dbReference type="PDBsum" id="7W8B"/>
<dbReference type="PDBsum" id="7W8I"/>
<dbReference type="PDBsum" id="7W9U"/>
<dbReference type="SMR" id="Q05397"/>
<dbReference type="BioGRID" id="111719">
    <property type="interactions" value="296"/>
</dbReference>
<dbReference type="CORUM" id="Q05397"/>
<dbReference type="ELM" id="Q05397"/>
<dbReference type="FunCoup" id="Q05397">
    <property type="interactions" value="3272"/>
</dbReference>
<dbReference type="IntAct" id="Q05397">
    <property type="interactions" value="140"/>
</dbReference>
<dbReference type="MINT" id="Q05397"/>
<dbReference type="STRING" id="9606.ENSP00000341189"/>
<dbReference type="BindingDB" id="Q05397"/>
<dbReference type="ChEMBL" id="CHEMBL2695"/>
<dbReference type="DrugBank" id="DB07460">
    <property type="generic name" value="2-({5-CHLORO-2-[(2-METHOXY-4-MORPHOLIN-4-YLPHENYL)AMINO]PYRIMIDIN-4-YL}AMINO)-N-METHYLBENZAMIDE"/>
</dbReference>
<dbReference type="DrugBank" id="DB07248">
    <property type="generic name" value="7-PYRIDIN-2-YL-N-(3,4,5-TRIMETHOXYPHENYL)-7H-PYRROLO[2,3-D]PYRIMIDIN-2-AMINE"/>
</dbReference>
<dbReference type="DrugBank" id="DB13060">
    <property type="generic name" value="CEP-37440"/>
</dbReference>
<dbReference type="DrugBank" id="DB12282">
    <property type="generic name" value="Defactinib"/>
</dbReference>
<dbReference type="DrugBank" id="DB06423">
    <property type="generic name" value="Endostatin"/>
</dbReference>
<dbReference type="DrugBank" id="DB12010">
    <property type="generic name" value="Fostamatinib"/>
</dbReference>
<dbReference type="DrugBank" id="DB16106">
    <property type="generic name" value="GSK2256098"/>
</dbReference>
<dbReference type="DrugBank" id="DB15273">
    <property type="generic name" value="VS-4718"/>
</dbReference>
<dbReference type="DrugCentral" id="Q05397"/>
<dbReference type="GuidetoPHARMACOLOGY" id="2180"/>
<dbReference type="CarbonylDB" id="Q05397"/>
<dbReference type="GlyGen" id="Q05397">
    <property type="glycosylation" value="10 sites, 1 N-linked glycan (2 sites), 1 O-linked glycan (1 site)"/>
</dbReference>
<dbReference type="iPTMnet" id="Q05397"/>
<dbReference type="PhosphoSitePlus" id="Q05397"/>
<dbReference type="SwissPalm" id="Q05397"/>
<dbReference type="BioMuta" id="PTK2"/>
<dbReference type="DMDM" id="3183518"/>
<dbReference type="CPTAC" id="CPTAC-1785"/>
<dbReference type="CPTAC" id="CPTAC-2852"/>
<dbReference type="jPOST" id="Q05397"/>
<dbReference type="MassIVE" id="Q05397"/>
<dbReference type="PaxDb" id="9606-ENSP00000341189"/>
<dbReference type="PeptideAtlas" id="Q05397"/>
<dbReference type="ProteomicsDB" id="58320">
    <molecule id="Q05397-1"/>
</dbReference>
<dbReference type="ProteomicsDB" id="58321">
    <molecule id="Q05397-2"/>
</dbReference>
<dbReference type="ProteomicsDB" id="58322">
    <molecule id="Q05397-3"/>
</dbReference>
<dbReference type="ProteomicsDB" id="58323">
    <molecule id="Q05397-4"/>
</dbReference>
<dbReference type="ProteomicsDB" id="58324">
    <molecule id="Q05397-5"/>
</dbReference>
<dbReference type="ProteomicsDB" id="58325">
    <molecule id="Q05397-6"/>
</dbReference>
<dbReference type="ProteomicsDB" id="71210"/>
<dbReference type="Pumba" id="Q05397"/>
<dbReference type="Antibodypedia" id="725">
    <property type="antibodies" value="2881 antibodies from 50 providers"/>
</dbReference>
<dbReference type="DNASU" id="5747"/>
<dbReference type="Ensembl" id="ENST00000340930.7">
    <molecule id="Q05397-5"/>
    <property type="protein sequence ID" value="ENSP00000341189.3"/>
    <property type="gene ID" value="ENSG00000169398.20"/>
</dbReference>
<dbReference type="Ensembl" id="ENST00000395218.3">
    <molecule id="Q05397-7"/>
    <property type="protein sequence ID" value="ENSP00000378644.3"/>
    <property type="gene ID" value="ENSG00000169398.20"/>
</dbReference>
<dbReference type="Ensembl" id="ENST00000521059.5">
    <molecule id="Q05397-1"/>
    <property type="protein sequence ID" value="ENSP00000429474.1"/>
    <property type="gene ID" value="ENSG00000169398.20"/>
</dbReference>
<dbReference type="Ensembl" id="ENST00000522684.5">
    <molecule id="Q05397-1"/>
    <property type="protein sequence ID" value="ENSP00000429911.1"/>
    <property type="gene ID" value="ENSG00000169398.20"/>
</dbReference>
<dbReference type="GeneID" id="5747"/>
<dbReference type="KEGG" id="hsa:5747"/>
<dbReference type="UCSC" id="uc003yvu.4">
    <molecule id="Q05397-1"/>
    <property type="organism name" value="human"/>
</dbReference>
<dbReference type="AGR" id="HGNC:9611"/>
<dbReference type="CTD" id="5747"/>
<dbReference type="DisGeNET" id="5747"/>
<dbReference type="GeneCards" id="PTK2"/>
<dbReference type="HGNC" id="HGNC:9611">
    <property type="gene designation" value="PTK2"/>
</dbReference>
<dbReference type="HPA" id="ENSG00000169398">
    <property type="expression patterns" value="Low tissue specificity"/>
</dbReference>
<dbReference type="MalaCards" id="PTK2"/>
<dbReference type="MIM" id="600758">
    <property type="type" value="gene"/>
</dbReference>
<dbReference type="neXtProt" id="NX_Q05397"/>
<dbReference type="OpenTargets" id="ENSG00000169398"/>
<dbReference type="PharmGKB" id="PA33955"/>
<dbReference type="VEuPathDB" id="HostDB:ENSG00000169398"/>
<dbReference type="eggNOG" id="KOG4257">
    <property type="taxonomic scope" value="Eukaryota"/>
</dbReference>
<dbReference type="GeneTree" id="ENSGT00940000155113"/>
<dbReference type="HOGENOM" id="CLU_002646_0_0_1"/>
<dbReference type="InParanoid" id="Q05397"/>
<dbReference type="OMA" id="HCTNTAE"/>
<dbReference type="OrthoDB" id="9976756at2759"/>
<dbReference type="PAN-GO" id="Q05397">
    <property type="GO annotations" value="13 GO annotations based on evolutionary models"/>
</dbReference>
<dbReference type="PhylomeDB" id="Q05397"/>
<dbReference type="TreeFam" id="TF316643"/>
<dbReference type="BRENDA" id="2.7.10.2">
    <property type="organism ID" value="2681"/>
</dbReference>
<dbReference type="PathwayCommons" id="Q05397"/>
<dbReference type="Reactome" id="R-HSA-111465">
    <property type="pathway name" value="Apoptotic cleavage of cellular proteins"/>
</dbReference>
<dbReference type="Reactome" id="R-HSA-2029482">
    <property type="pathway name" value="Regulation of actin dynamics for phagocytic cup formation"/>
</dbReference>
<dbReference type="Reactome" id="R-HSA-354192">
    <property type="pathway name" value="Integrin signaling"/>
</dbReference>
<dbReference type="Reactome" id="R-HSA-354194">
    <property type="pathway name" value="GRB2:SOS provides linkage to MAPK signaling for Integrins"/>
</dbReference>
<dbReference type="Reactome" id="R-HSA-372708">
    <property type="pathway name" value="p130Cas linkage to MAPK signaling for integrins"/>
</dbReference>
<dbReference type="Reactome" id="R-HSA-375165">
    <property type="pathway name" value="NCAM signaling for neurite out-growth"/>
</dbReference>
<dbReference type="Reactome" id="R-HSA-391160">
    <property type="pathway name" value="Signal regulatory protein family interactions"/>
</dbReference>
<dbReference type="Reactome" id="R-HSA-3928662">
    <property type="pathway name" value="EPHB-mediated forward signaling"/>
</dbReference>
<dbReference type="Reactome" id="R-HSA-418885">
    <property type="pathway name" value="DCC mediated attractive signaling"/>
</dbReference>
<dbReference type="Reactome" id="R-HSA-4420097">
    <property type="pathway name" value="VEGFA-VEGFR2 Pathway"/>
</dbReference>
<dbReference type="Reactome" id="R-HSA-5663213">
    <property type="pathway name" value="RHO GTPases Activate WASPs and WAVEs"/>
</dbReference>
<dbReference type="Reactome" id="R-HSA-5673001">
    <property type="pathway name" value="RAF/MAP kinase cascade"/>
</dbReference>
<dbReference type="Reactome" id="R-HSA-8874081">
    <property type="pathway name" value="MET activates PTK2 signaling"/>
</dbReference>
<dbReference type="Reactome" id="R-HSA-9009391">
    <property type="pathway name" value="Extra-nuclear estrogen signaling"/>
</dbReference>
<dbReference type="Reactome" id="R-HSA-9634638">
    <property type="pathway name" value="Estrogen-dependent nuclear events downstream of ESR-membrane signaling"/>
</dbReference>
<dbReference type="Reactome" id="R-HSA-9664422">
    <property type="pathway name" value="FCGR3A-mediated phagocytosis"/>
</dbReference>
<dbReference type="Reactome" id="R-HSA-9860927">
    <property type="pathway name" value="Turbulent (oscillatory, disturbed) flow shear stress activates signaling by PIEZO1 and integrins in endothelial cells"/>
</dbReference>
<dbReference type="SignaLink" id="Q05397"/>
<dbReference type="SIGNOR" id="Q05397"/>
<dbReference type="BioGRID-ORCS" id="5747">
    <property type="hits" value="415 hits in 1209 CRISPR screens"/>
</dbReference>
<dbReference type="CD-CODE" id="8C2F96ED">
    <property type="entry name" value="Centrosome"/>
</dbReference>
<dbReference type="CD-CODE" id="DEE660B4">
    <property type="entry name" value="Stress granule"/>
</dbReference>
<dbReference type="CD-CODE" id="FB4E32DD">
    <property type="entry name" value="Presynaptic clusters and postsynaptic densities"/>
</dbReference>
<dbReference type="ChiTaRS" id="PTK2">
    <property type="organism name" value="human"/>
</dbReference>
<dbReference type="EvolutionaryTrace" id="Q05397"/>
<dbReference type="GeneWiki" id="PTK2"/>
<dbReference type="GenomeRNAi" id="5747"/>
<dbReference type="Pharos" id="Q05397">
    <property type="development level" value="Tclin"/>
</dbReference>
<dbReference type="PRO" id="PR:Q05397"/>
<dbReference type="Proteomes" id="UP000005640">
    <property type="component" value="Chromosome 8"/>
</dbReference>
<dbReference type="RNAct" id="Q05397">
    <property type="molecule type" value="protein"/>
</dbReference>
<dbReference type="Bgee" id="ENSG00000169398">
    <property type="expression patterns" value="Expressed in corpus callosum and 210 other cell types or tissues"/>
</dbReference>
<dbReference type="ExpressionAtlas" id="Q05397">
    <property type="expression patterns" value="baseline and differential"/>
</dbReference>
<dbReference type="GO" id="GO:0005938">
    <property type="term" value="C:cell cortex"/>
    <property type="evidence" value="ECO:0007669"/>
    <property type="project" value="UniProtKB-SubCell"/>
</dbReference>
<dbReference type="GO" id="GO:0005813">
    <property type="term" value="C:centrosome"/>
    <property type="evidence" value="ECO:0007669"/>
    <property type="project" value="UniProtKB-SubCell"/>
</dbReference>
<dbReference type="GO" id="GO:0036064">
    <property type="term" value="C:ciliary basal body"/>
    <property type="evidence" value="ECO:0000314"/>
    <property type="project" value="UniProtKB"/>
</dbReference>
<dbReference type="GO" id="GO:0005929">
    <property type="term" value="C:cilium"/>
    <property type="evidence" value="ECO:0000314"/>
    <property type="project" value="HPA"/>
</dbReference>
<dbReference type="GO" id="GO:0005856">
    <property type="term" value="C:cytoskeleton"/>
    <property type="evidence" value="ECO:0000304"/>
    <property type="project" value="ProtInc"/>
</dbReference>
<dbReference type="GO" id="GO:0005829">
    <property type="term" value="C:cytosol"/>
    <property type="evidence" value="ECO:0000314"/>
    <property type="project" value="HPA"/>
</dbReference>
<dbReference type="GO" id="GO:0005925">
    <property type="term" value="C:focal adhesion"/>
    <property type="evidence" value="ECO:0000314"/>
    <property type="project" value="HPA"/>
</dbReference>
<dbReference type="GO" id="GO:0043231">
    <property type="term" value="C:intracellular membrane-bounded organelle"/>
    <property type="evidence" value="ECO:0000314"/>
    <property type="project" value="HPA"/>
</dbReference>
<dbReference type="GO" id="GO:0005634">
    <property type="term" value="C:nucleus"/>
    <property type="evidence" value="ECO:0000314"/>
    <property type="project" value="UniProtKB"/>
</dbReference>
<dbReference type="GO" id="GO:0048471">
    <property type="term" value="C:perinuclear region of cytoplasm"/>
    <property type="evidence" value="ECO:0007669"/>
    <property type="project" value="UniProtKB-SubCell"/>
</dbReference>
<dbReference type="GO" id="GO:0005886">
    <property type="term" value="C:plasma membrane"/>
    <property type="evidence" value="ECO:0000318"/>
    <property type="project" value="GO_Central"/>
</dbReference>
<dbReference type="GO" id="GO:0001725">
    <property type="term" value="C:stress fiber"/>
    <property type="evidence" value="ECO:0000314"/>
    <property type="project" value="UniProtKB"/>
</dbReference>
<dbReference type="GO" id="GO:0003779">
    <property type="term" value="F:actin binding"/>
    <property type="evidence" value="ECO:0000314"/>
    <property type="project" value="BHF-UCL"/>
</dbReference>
<dbReference type="GO" id="GO:0005524">
    <property type="term" value="F:ATP binding"/>
    <property type="evidence" value="ECO:0007669"/>
    <property type="project" value="UniProtKB-KW"/>
</dbReference>
<dbReference type="GO" id="GO:0005178">
    <property type="term" value="F:integrin binding"/>
    <property type="evidence" value="ECO:0000353"/>
    <property type="project" value="ARUK-UCL"/>
</dbReference>
<dbReference type="GO" id="GO:0008432">
    <property type="term" value="F:JUN kinase binding"/>
    <property type="evidence" value="ECO:0000314"/>
    <property type="project" value="BHF-UCL"/>
</dbReference>
<dbReference type="GO" id="GO:0140677">
    <property type="term" value="F:molecular function activator activity"/>
    <property type="evidence" value="ECO:0000269"/>
    <property type="project" value="DisProt"/>
</dbReference>
<dbReference type="GO" id="GO:0004715">
    <property type="term" value="F:non-membrane spanning protein tyrosine kinase activity"/>
    <property type="evidence" value="ECO:0000314"/>
    <property type="project" value="UniProtKB"/>
</dbReference>
<dbReference type="GO" id="GO:0019901">
    <property type="term" value="F:protein kinase binding"/>
    <property type="evidence" value="ECO:0000353"/>
    <property type="project" value="UniProtKB"/>
</dbReference>
<dbReference type="GO" id="GO:0019903">
    <property type="term" value="F:protein phosphatase binding"/>
    <property type="evidence" value="ECO:0000353"/>
    <property type="project" value="BHF-UCL"/>
</dbReference>
<dbReference type="GO" id="GO:0004713">
    <property type="term" value="F:protein tyrosine kinase activity"/>
    <property type="evidence" value="ECO:0000269"/>
    <property type="project" value="Reactome"/>
</dbReference>
<dbReference type="GO" id="GO:0004725">
    <property type="term" value="F:protein tyrosine phosphatase activity"/>
    <property type="evidence" value="ECO:0000315"/>
    <property type="project" value="UniProtKB"/>
</dbReference>
<dbReference type="GO" id="GO:0042169">
    <property type="term" value="F:SH2 domain binding"/>
    <property type="evidence" value="ECO:0000353"/>
    <property type="project" value="UniProtKB"/>
</dbReference>
<dbReference type="GO" id="GO:0001525">
    <property type="term" value="P:angiogenesis"/>
    <property type="evidence" value="ECO:0000304"/>
    <property type="project" value="UniProtKB"/>
</dbReference>
<dbReference type="GO" id="GO:0007411">
    <property type="term" value="P:axon guidance"/>
    <property type="evidence" value="ECO:0000304"/>
    <property type="project" value="UniProtKB"/>
</dbReference>
<dbReference type="GO" id="GO:0016477">
    <property type="term" value="P:cell migration"/>
    <property type="evidence" value="ECO:0000315"/>
    <property type="project" value="BHF-UCL"/>
</dbReference>
<dbReference type="GO" id="GO:0048870">
    <property type="term" value="P:cell motility"/>
    <property type="evidence" value="ECO:0000304"/>
    <property type="project" value="UniProtKB"/>
</dbReference>
<dbReference type="GO" id="GO:0035995">
    <property type="term" value="P:detection of muscle stretch"/>
    <property type="evidence" value="ECO:0000304"/>
    <property type="project" value="BHF-UCL"/>
</dbReference>
<dbReference type="GO" id="GO:0048013">
    <property type="term" value="P:ephrin receptor signaling pathway"/>
    <property type="evidence" value="ECO:0000314"/>
    <property type="project" value="UniProtKB"/>
</dbReference>
<dbReference type="GO" id="GO:0007173">
    <property type="term" value="P:epidermal growth factor receptor signaling pathway"/>
    <property type="evidence" value="ECO:0000318"/>
    <property type="project" value="GO_Central"/>
</dbReference>
<dbReference type="GO" id="GO:0030010">
    <property type="term" value="P:establishment of cell polarity"/>
    <property type="evidence" value="ECO:0000304"/>
    <property type="project" value="UniProtKB"/>
</dbReference>
<dbReference type="GO" id="GO:0038096">
    <property type="term" value="P:Fc-gamma receptor signaling pathway involved in phagocytosis"/>
    <property type="evidence" value="ECO:0000304"/>
    <property type="project" value="Reactome"/>
</dbReference>
<dbReference type="GO" id="GO:0060396">
    <property type="term" value="P:growth hormone receptor signaling pathway"/>
    <property type="evidence" value="ECO:0000314"/>
    <property type="project" value="BHF-UCL"/>
</dbReference>
<dbReference type="GO" id="GO:0003007">
    <property type="term" value="P:heart morphogenesis"/>
    <property type="evidence" value="ECO:0000304"/>
    <property type="project" value="UniProtKB"/>
</dbReference>
<dbReference type="GO" id="GO:0007229">
    <property type="term" value="P:integrin-mediated signaling pathway"/>
    <property type="evidence" value="ECO:0000314"/>
    <property type="project" value="UniProtKB"/>
</dbReference>
<dbReference type="GO" id="GO:2000811">
    <property type="term" value="P:negative regulation of anoikis"/>
    <property type="evidence" value="ECO:0000315"/>
    <property type="project" value="UniProtKB"/>
</dbReference>
<dbReference type="GO" id="GO:0043066">
    <property type="term" value="P:negative regulation of apoptotic process"/>
    <property type="evidence" value="ECO:0000315"/>
    <property type="project" value="UniProtKB"/>
</dbReference>
<dbReference type="GO" id="GO:0022408">
    <property type="term" value="P:negative regulation of cell-cell adhesion"/>
    <property type="evidence" value="ECO:0000314"/>
    <property type="project" value="BHF-UCL"/>
</dbReference>
<dbReference type="GO" id="GO:0038007">
    <property type="term" value="P:netrin-activated signaling pathway"/>
    <property type="evidence" value="ECO:0000304"/>
    <property type="project" value="UniProtKB"/>
</dbReference>
<dbReference type="GO" id="GO:0018108">
    <property type="term" value="P:peptidyl-tyrosine phosphorylation"/>
    <property type="evidence" value="ECO:0000314"/>
    <property type="project" value="UniProtKB"/>
</dbReference>
<dbReference type="GO" id="GO:0001890">
    <property type="term" value="P:placenta development"/>
    <property type="evidence" value="ECO:0000304"/>
    <property type="project" value="UniProtKB"/>
</dbReference>
<dbReference type="GO" id="GO:0030335">
    <property type="term" value="P:positive regulation of cell migration"/>
    <property type="evidence" value="ECO:0000314"/>
    <property type="project" value="UniProtKB"/>
</dbReference>
<dbReference type="GO" id="GO:0008284">
    <property type="term" value="P:positive regulation of cell population proliferation"/>
    <property type="evidence" value="ECO:0000250"/>
    <property type="project" value="UniProtKB"/>
</dbReference>
<dbReference type="GO" id="GO:0010634">
    <property type="term" value="P:positive regulation of epithelial cell migration"/>
    <property type="evidence" value="ECO:0000316"/>
    <property type="project" value="BHF-UCL"/>
</dbReference>
<dbReference type="GO" id="GO:0010718">
    <property type="term" value="P:positive regulation of epithelial to mesenchymal transition"/>
    <property type="evidence" value="ECO:0000316"/>
    <property type="project" value="BHF-UCL"/>
</dbReference>
<dbReference type="GO" id="GO:0010763">
    <property type="term" value="P:positive regulation of fibroblast migration"/>
    <property type="evidence" value="ECO:0000314"/>
    <property type="project" value="ARUK-UCL"/>
</dbReference>
<dbReference type="GO" id="GO:0010759">
    <property type="term" value="P:positive regulation of macrophage chemotaxis"/>
    <property type="evidence" value="ECO:0000316"/>
    <property type="project" value="ARUK-UCL"/>
</dbReference>
<dbReference type="GO" id="GO:0120041">
    <property type="term" value="P:positive regulation of macrophage proliferation"/>
    <property type="evidence" value="ECO:0000316"/>
    <property type="project" value="ARUK-UCL"/>
</dbReference>
<dbReference type="GO" id="GO:0051897">
    <property type="term" value="P:positive regulation of phosphatidylinositol 3-kinase/protein kinase B signal transduction"/>
    <property type="evidence" value="ECO:0000315"/>
    <property type="project" value="UniProtKB"/>
</dbReference>
<dbReference type="GO" id="GO:0045860">
    <property type="term" value="P:positive regulation of protein kinase activity"/>
    <property type="evidence" value="ECO:0000315"/>
    <property type="project" value="UniProtKB"/>
</dbReference>
<dbReference type="GO" id="GO:0001934">
    <property type="term" value="P:positive regulation of protein phosphorylation"/>
    <property type="evidence" value="ECO:0000315"/>
    <property type="project" value="UniProtKB"/>
</dbReference>
<dbReference type="GO" id="GO:2000060">
    <property type="term" value="P:positive regulation of ubiquitin-dependent protein catabolic process"/>
    <property type="evidence" value="ECO:0000250"/>
    <property type="project" value="UniProtKB"/>
</dbReference>
<dbReference type="GO" id="GO:0090303">
    <property type="term" value="P:positive regulation of wound healing"/>
    <property type="evidence" value="ECO:0000314"/>
    <property type="project" value="ARUK-UCL"/>
</dbReference>
<dbReference type="GO" id="GO:0046777">
    <property type="term" value="P:protein autophosphorylation"/>
    <property type="evidence" value="ECO:0000314"/>
    <property type="project" value="UniProtKB"/>
</dbReference>
<dbReference type="GO" id="GO:0030155">
    <property type="term" value="P:regulation of cell adhesion"/>
    <property type="evidence" value="ECO:0000318"/>
    <property type="project" value="GO_Central"/>
</dbReference>
<dbReference type="GO" id="GO:0033628">
    <property type="term" value="P:regulation of cell adhesion mediated by integrin"/>
    <property type="evidence" value="ECO:0000314"/>
    <property type="project" value="UniProtKB"/>
</dbReference>
<dbReference type="GO" id="GO:0042127">
    <property type="term" value="P:regulation of cell population proliferation"/>
    <property type="evidence" value="ECO:0000315"/>
    <property type="project" value="UniProtKB"/>
</dbReference>
<dbReference type="GO" id="GO:0008360">
    <property type="term" value="P:regulation of cell shape"/>
    <property type="evidence" value="ECO:0000315"/>
    <property type="project" value="UniProtKB"/>
</dbReference>
<dbReference type="GO" id="GO:0051493">
    <property type="term" value="P:regulation of cytoskeleton organization"/>
    <property type="evidence" value="ECO:0000304"/>
    <property type="project" value="UniProtKB"/>
</dbReference>
<dbReference type="GO" id="GO:0010594">
    <property type="term" value="P:regulation of endothelial cell migration"/>
    <property type="evidence" value="ECO:0000304"/>
    <property type="project" value="UniProtKB"/>
</dbReference>
<dbReference type="GO" id="GO:0010632">
    <property type="term" value="P:regulation of epithelial cell migration"/>
    <property type="evidence" value="ECO:0000316"/>
    <property type="project" value="UniProtKB"/>
</dbReference>
<dbReference type="GO" id="GO:0051893">
    <property type="term" value="P:regulation of focal adhesion assembly"/>
    <property type="evidence" value="ECO:0000316"/>
    <property type="project" value="UniProtKB"/>
</dbReference>
<dbReference type="GO" id="GO:0043087">
    <property type="term" value="P:regulation of GTPase activity"/>
    <property type="evidence" value="ECO:0000304"/>
    <property type="project" value="UniProtKB"/>
</dbReference>
<dbReference type="GO" id="GO:0045667">
    <property type="term" value="P:regulation of osteoblast differentiation"/>
    <property type="evidence" value="ECO:0000315"/>
    <property type="project" value="UniProtKB"/>
</dbReference>
<dbReference type="GO" id="GO:0001932">
    <property type="term" value="P:regulation of protein phosphorylation"/>
    <property type="evidence" value="ECO:0000316"/>
    <property type="project" value="UniProtKB"/>
</dbReference>
<dbReference type="GO" id="GO:1900024">
    <property type="term" value="P:regulation of substrate adhesion-dependent cell spreading"/>
    <property type="evidence" value="ECO:0000316"/>
    <property type="project" value="UniProtKB"/>
</dbReference>
<dbReference type="GO" id="GO:0007172">
    <property type="term" value="P:signal complex assembly"/>
    <property type="evidence" value="ECO:0007669"/>
    <property type="project" value="InterPro"/>
</dbReference>
<dbReference type="GO" id="GO:0007179">
    <property type="term" value="P:transforming growth factor beta receptor signaling pathway"/>
    <property type="evidence" value="ECO:0000314"/>
    <property type="project" value="UniProtKB"/>
</dbReference>
<dbReference type="GO" id="GO:0097706">
    <property type="term" value="P:vascular endothelial cell response to oscillatory fluid shear stress"/>
    <property type="evidence" value="ECO:0000304"/>
    <property type="project" value="Reactome"/>
</dbReference>
<dbReference type="GO" id="GO:0048010">
    <property type="term" value="P:vascular endothelial growth factor receptor signaling pathway"/>
    <property type="evidence" value="ECO:0000304"/>
    <property type="project" value="Reactome"/>
</dbReference>
<dbReference type="CDD" id="cd14473">
    <property type="entry name" value="FERM_B-lobe"/>
    <property type="match status" value="1"/>
</dbReference>
<dbReference type="CDD" id="cd13190">
    <property type="entry name" value="FERM_C_FAK1"/>
    <property type="match status" value="1"/>
</dbReference>
<dbReference type="CDD" id="cd05056">
    <property type="entry name" value="PTKc_FAK"/>
    <property type="match status" value="1"/>
</dbReference>
<dbReference type="FunFam" id="1.20.120.330:FF:000001">
    <property type="entry name" value="focal adhesion kinase 1 isoform X1"/>
    <property type="match status" value="1"/>
</dbReference>
<dbReference type="FunFam" id="2.30.29.30:FF:000058">
    <property type="entry name" value="focal adhesion kinase 1 isoform X1"/>
    <property type="match status" value="1"/>
</dbReference>
<dbReference type="FunFam" id="3.10.20.90:FF:000021">
    <property type="entry name" value="focal adhesion kinase 1 isoform X1"/>
    <property type="match status" value="1"/>
</dbReference>
<dbReference type="FunFam" id="3.30.200.20:FF:000047">
    <property type="entry name" value="focal adhesion kinase 1 isoform X2"/>
    <property type="match status" value="1"/>
</dbReference>
<dbReference type="FunFam" id="1.10.510.10:FF:000039">
    <property type="entry name" value="Focal adhesion kinase, isoform D"/>
    <property type="match status" value="1"/>
</dbReference>
<dbReference type="FunFam" id="1.20.80.10:FF:000004">
    <property type="entry name" value="Protein-tyrosine kinase 2-beta isoform 1"/>
    <property type="match status" value="1"/>
</dbReference>
<dbReference type="Gene3D" id="1.20.80.10">
    <property type="match status" value="1"/>
</dbReference>
<dbReference type="Gene3D" id="1.20.120.330">
    <property type="entry name" value="Nucleotidyltransferases domain 2"/>
    <property type="match status" value="1"/>
</dbReference>
<dbReference type="Gene3D" id="3.10.20.90">
    <property type="entry name" value="Phosphatidylinositol 3-kinase Catalytic Subunit, Chain A, domain 1"/>
    <property type="match status" value="1"/>
</dbReference>
<dbReference type="Gene3D" id="3.30.200.20">
    <property type="entry name" value="Phosphorylase Kinase, domain 1"/>
    <property type="match status" value="1"/>
</dbReference>
<dbReference type="Gene3D" id="2.30.29.30">
    <property type="entry name" value="Pleckstrin-homology domain (PH domain)/Phosphotyrosine-binding domain (PTB)"/>
    <property type="match status" value="1"/>
</dbReference>
<dbReference type="Gene3D" id="1.20.5.540">
    <property type="entry name" value="Single helix bin"/>
    <property type="match status" value="1"/>
</dbReference>
<dbReference type="Gene3D" id="1.10.510.10">
    <property type="entry name" value="Transferase(Phosphotransferase) domain 1"/>
    <property type="match status" value="1"/>
</dbReference>
<dbReference type="InterPro" id="IPR019749">
    <property type="entry name" value="Band_41_domain"/>
</dbReference>
<dbReference type="InterPro" id="IPR041390">
    <property type="entry name" value="FADK_N"/>
</dbReference>
<dbReference type="InterPro" id="IPR049385">
    <property type="entry name" value="FAK1-like_FERM_C"/>
</dbReference>
<dbReference type="InterPro" id="IPR041784">
    <property type="entry name" value="FAK1/PYK2_FERM_C"/>
</dbReference>
<dbReference type="InterPro" id="IPR014352">
    <property type="entry name" value="FERM/acyl-CoA-bd_prot_sf"/>
</dbReference>
<dbReference type="InterPro" id="IPR035963">
    <property type="entry name" value="FERM_2"/>
</dbReference>
<dbReference type="InterPro" id="IPR019748">
    <property type="entry name" value="FERM_central"/>
</dbReference>
<dbReference type="InterPro" id="IPR000299">
    <property type="entry name" value="FERM_domain"/>
</dbReference>
<dbReference type="InterPro" id="IPR036137">
    <property type="entry name" value="Focal_adhe_kin_target_dom_sf"/>
</dbReference>
<dbReference type="InterPro" id="IPR005189">
    <property type="entry name" value="Focal_adhesion_kin_target_dom"/>
</dbReference>
<dbReference type="InterPro" id="IPR011009">
    <property type="entry name" value="Kinase-like_dom_sf"/>
</dbReference>
<dbReference type="InterPro" id="IPR011993">
    <property type="entry name" value="PH-like_dom_sf"/>
</dbReference>
<dbReference type="InterPro" id="IPR000719">
    <property type="entry name" value="Prot_kinase_dom"/>
</dbReference>
<dbReference type="InterPro" id="IPR017441">
    <property type="entry name" value="Protein_kinase_ATP_BS"/>
</dbReference>
<dbReference type="InterPro" id="IPR001245">
    <property type="entry name" value="Ser-Thr/Tyr_kinase_cat_dom"/>
</dbReference>
<dbReference type="InterPro" id="IPR008266">
    <property type="entry name" value="Tyr_kinase_AS"/>
</dbReference>
<dbReference type="InterPro" id="IPR020635">
    <property type="entry name" value="Tyr_kinase_cat_dom"/>
</dbReference>
<dbReference type="InterPro" id="IPR029071">
    <property type="entry name" value="Ubiquitin-like_domsf"/>
</dbReference>
<dbReference type="PANTHER" id="PTHR46221">
    <property type="entry name" value="FERM AND PDZ DOMAIN-CONTAINING PROTEIN FAMILY MEMBER"/>
    <property type="match status" value="1"/>
</dbReference>
<dbReference type="PANTHER" id="PTHR46221:SF12">
    <property type="entry name" value="NON-SPECIFIC PROTEIN-TYROSINE KINASE"/>
    <property type="match status" value="1"/>
</dbReference>
<dbReference type="Pfam" id="PF21477">
    <property type="entry name" value="FERM_C_FAK1"/>
    <property type="match status" value="1"/>
</dbReference>
<dbReference type="Pfam" id="PF00373">
    <property type="entry name" value="FERM_M"/>
    <property type="match status" value="1"/>
</dbReference>
<dbReference type="Pfam" id="PF18038">
    <property type="entry name" value="FERM_N_2"/>
    <property type="match status" value="1"/>
</dbReference>
<dbReference type="Pfam" id="PF03623">
    <property type="entry name" value="Focal_AT"/>
    <property type="match status" value="1"/>
</dbReference>
<dbReference type="Pfam" id="PF07714">
    <property type="entry name" value="PK_Tyr_Ser-Thr"/>
    <property type="match status" value="1"/>
</dbReference>
<dbReference type="PRINTS" id="PR00109">
    <property type="entry name" value="TYRKINASE"/>
</dbReference>
<dbReference type="SMART" id="SM00295">
    <property type="entry name" value="B41"/>
    <property type="match status" value="1"/>
</dbReference>
<dbReference type="SMART" id="SM00219">
    <property type="entry name" value="TyrKc"/>
    <property type="match status" value="1"/>
</dbReference>
<dbReference type="SUPFAM" id="SSF68993">
    <property type="entry name" value="FAT domain of focal adhesion kinase"/>
    <property type="match status" value="1"/>
</dbReference>
<dbReference type="SUPFAM" id="SSF50729">
    <property type="entry name" value="PH domain-like"/>
    <property type="match status" value="1"/>
</dbReference>
<dbReference type="SUPFAM" id="SSF56112">
    <property type="entry name" value="Protein kinase-like (PK-like)"/>
    <property type="match status" value="1"/>
</dbReference>
<dbReference type="SUPFAM" id="SSF47031">
    <property type="entry name" value="Second domain of FERM"/>
    <property type="match status" value="1"/>
</dbReference>
<dbReference type="SUPFAM" id="SSF54236">
    <property type="entry name" value="Ubiquitin-like"/>
    <property type="match status" value="1"/>
</dbReference>
<dbReference type="PROSITE" id="PS00661">
    <property type="entry name" value="FERM_2"/>
    <property type="match status" value="1"/>
</dbReference>
<dbReference type="PROSITE" id="PS50057">
    <property type="entry name" value="FERM_3"/>
    <property type="match status" value="1"/>
</dbReference>
<dbReference type="PROSITE" id="PS00107">
    <property type="entry name" value="PROTEIN_KINASE_ATP"/>
    <property type="match status" value="1"/>
</dbReference>
<dbReference type="PROSITE" id="PS50011">
    <property type="entry name" value="PROTEIN_KINASE_DOM"/>
    <property type="match status" value="1"/>
</dbReference>
<dbReference type="PROSITE" id="PS00109">
    <property type="entry name" value="PROTEIN_KINASE_TYR"/>
    <property type="match status" value="1"/>
</dbReference>
<proteinExistence type="evidence at protein level"/>
<name>FAK1_HUMAN</name>
<organism>
    <name type="scientific">Homo sapiens</name>
    <name type="common">Human</name>
    <dbReference type="NCBI Taxonomy" id="9606"/>
    <lineage>
        <taxon>Eukaryota</taxon>
        <taxon>Metazoa</taxon>
        <taxon>Chordata</taxon>
        <taxon>Craniata</taxon>
        <taxon>Vertebrata</taxon>
        <taxon>Euteleostomi</taxon>
        <taxon>Mammalia</taxon>
        <taxon>Eutheria</taxon>
        <taxon>Euarchontoglires</taxon>
        <taxon>Primates</taxon>
        <taxon>Haplorrhini</taxon>
        <taxon>Catarrhini</taxon>
        <taxon>Hominidae</taxon>
        <taxon>Homo</taxon>
    </lineage>
</organism>
<feature type="initiator methionine" description="Removed" evidence="61 69 70">
    <location>
        <position position="1"/>
    </location>
</feature>
<feature type="chain" id="PRO_0000088077" description="Focal adhesion kinase 1">
    <location>
        <begin position="2"/>
        <end position="1052"/>
    </location>
</feature>
<feature type="domain" description="FERM" evidence="5">
    <location>
        <begin position="35"/>
        <end position="355"/>
    </location>
</feature>
<feature type="domain" description="Protein kinase" evidence="6">
    <location>
        <begin position="422"/>
        <end position="680"/>
    </location>
</feature>
<feature type="region of interest" description="Disordered" evidence="8">
    <location>
        <begin position="1"/>
        <end position="27"/>
    </location>
</feature>
<feature type="region of interest" description="Disordered" evidence="8">
    <location>
        <begin position="684"/>
        <end position="734"/>
    </location>
</feature>
<feature type="region of interest" description="Interaction with TGFB1I1">
    <location>
        <begin position="707"/>
        <end position="1052"/>
    </location>
</feature>
<feature type="region of interest" description="Disordered" evidence="8">
    <location>
        <begin position="839"/>
        <end position="922"/>
    </location>
</feature>
<feature type="region of interest" description="Interaction with ARHGEF28" evidence="1">
    <location>
        <begin position="912"/>
        <end position="1052"/>
    </location>
</feature>
<feature type="compositionally biased region" description="Polar residues" evidence="8">
    <location>
        <begin position="10"/>
        <end position="21"/>
    </location>
</feature>
<feature type="compositionally biased region" description="Basic and acidic residues" evidence="8">
    <location>
        <begin position="684"/>
        <end position="697"/>
    </location>
</feature>
<feature type="compositionally biased region" description="Basic and acidic residues" evidence="8">
    <location>
        <begin position="839"/>
        <end position="849"/>
    </location>
</feature>
<feature type="compositionally biased region" description="Pro residues" evidence="8">
    <location>
        <begin position="869"/>
        <end position="880"/>
    </location>
</feature>
<feature type="active site" description="Proton acceptor" evidence="6 7">
    <location>
        <position position="546"/>
    </location>
</feature>
<feature type="binding site" evidence="6 14">
    <location>
        <begin position="428"/>
        <end position="434"/>
    </location>
    <ligand>
        <name>ATP</name>
        <dbReference type="ChEBI" id="CHEBI:30616"/>
    </ligand>
</feature>
<feature type="binding site" evidence="6 14">
    <location>
        <position position="454"/>
    </location>
    <ligand>
        <name>ATP</name>
        <dbReference type="ChEBI" id="CHEBI:30616"/>
    </ligand>
</feature>
<feature type="binding site" evidence="6 14">
    <location>
        <begin position="500"/>
        <end position="502"/>
    </location>
    <ligand>
        <name>ATP</name>
        <dbReference type="ChEBI" id="CHEBI:30616"/>
    </ligand>
</feature>
<feature type="modified residue" description="N-acetylalanine" evidence="61 69 70">
    <location>
        <position position="2"/>
    </location>
</feature>
<feature type="modified residue" description="Phosphotyrosine" evidence="69">
    <location>
        <position position="5"/>
    </location>
</feature>
<feature type="modified residue" description="Phosphothreonine" evidence="68 69 72">
    <location>
        <position position="13"/>
    </location>
</feature>
<feature type="modified residue" description="Phosphoserine" evidence="68 69 72">
    <location>
        <position position="29"/>
    </location>
</feature>
<feature type="modified residue" description="Phosphoserine" evidence="3">
    <location>
        <position position="54"/>
    </location>
</feature>
<feature type="modified residue" description="Phosphotyrosine; by autocatalysis" evidence="13 17 24 25 27 40 69">
    <location>
        <position position="397"/>
    </location>
</feature>
<feature type="modified residue" description="Phosphotyrosine" evidence="13 17">
    <location>
        <position position="407"/>
    </location>
</feature>
<feature type="modified residue" description="Phosphotyrosine" evidence="69">
    <location>
        <position position="570"/>
    </location>
</feature>
<feature type="modified residue" description="Phosphotyrosine; by RET and SRC" evidence="17 40 50">
    <location>
        <position position="576"/>
    </location>
</feature>
<feature type="modified residue" description="Phosphotyrosine; by RET and SRC" evidence="13 40 50">
    <location>
        <position position="577"/>
    </location>
</feature>
<feature type="modified residue" description="Phosphoserine" evidence="69">
    <location>
        <position position="580"/>
    </location>
</feature>
<feature type="modified residue" description="Phosphoserine" evidence="40">
    <location>
        <position position="722"/>
    </location>
</feature>
<feature type="modified residue" description="Phosphoserine; by CDK5" evidence="3">
    <location>
        <position position="732"/>
    </location>
</feature>
<feature type="modified residue" description="Phosphoserine" evidence="72">
    <location>
        <position position="843"/>
    </location>
</feature>
<feature type="modified residue" description="Phosphotyrosine" evidence="13 27 40">
    <location>
        <position position="861"/>
    </location>
</feature>
<feature type="modified residue" description="Phosphoserine" evidence="68">
    <location>
        <position position="887"/>
    </location>
</feature>
<feature type="modified residue" description="Phosphoserine" evidence="67 68 69 71 72">
    <location>
        <position position="910"/>
    </location>
</feature>
<feature type="modified residue" description="Phosphothreonine" evidence="71">
    <location>
        <position position="914"/>
    </location>
</feature>
<feature type="modified residue" description="Phosphotyrosine" evidence="13 40">
    <location>
        <position position="925"/>
    </location>
</feature>
<feature type="cross-link" description="Glycyl lysine isopeptide (Lys-Gly) (interchain with G-Cter in SUMO)" evidence="1">
    <location>
        <position position="152"/>
    </location>
</feature>
<feature type="splice variant" id="VSP_042168" description="In isoform 6." evidence="65">
    <location>
        <begin position="1"/>
        <end position="692"/>
    </location>
</feature>
<feature type="splice variant" id="VSP_004967" description="In isoform 2, isoform 3 and isoform 4." evidence="64">
    <location>
        <begin position="1"/>
        <end position="181"/>
    </location>
</feature>
<feature type="splice variant" id="VSP_004968" description="In isoform 2, isoform 3 and isoform 4." evidence="64">
    <original>EMRGNALE</original>
    <variation>MSDYWVVG</variation>
    <location>
        <begin position="182"/>
        <end position="189"/>
    </location>
</feature>
<feature type="splice variant" id="VSP_004969" description="In isoform 2, isoform 3 and isoform 4." evidence="64">
    <original>A</original>
    <variation>ACHYTSLHWNWCRYISDPNVDACPDPRNAE</variation>
    <location>
        <position position="472"/>
    </location>
</feature>
<feature type="splice variant" id="VSP_004971" description="In isoform 4." evidence="64">
    <original>ASKGK</original>
    <variation>GKKSG</variation>
    <location>
        <begin position="579"/>
        <end position="583"/>
    </location>
</feature>
<feature type="splice variant" id="VSP_004972" description="In isoform 4." evidence="64">
    <location>
        <begin position="584"/>
        <end position="1052"/>
    </location>
</feature>
<feature type="splice variant" id="VSP_004973" description="In isoform 3." evidence="64">
    <original>STILEEEKAQQEERMRMESRRQATVSWDSG</original>
    <variation>FQNPAQMLPASGRLPNQPCPERENYSFATF</variation>
    <location>
        <begin position="677"/>
        <end position="706"/>
    </location>
</feature>
<feature type="splice variant" id="VSP_004974" description="In isoform 3." evidence="64">
    <location>
        <begin position="707"/>
        <end position="1052"/>
    </location>
</feature>
<feature type="splice variant" id="VSP_057268" description="In isoform 7." evidence="63">
    <location>
        <begin position="744"/>
        <end position="789"/>
    </location>
</feature>
<feature type="splice variant" id="VSP_004970" description="In isoform 2." evidence="64">
    <location>
        <begin position="834"/>
        <end position="854"/>
    </location>
</feature>
<feature type="splice variant" id="VSP_042169" description="In isoform 5." evidence="62">
    <original>D</original>
    <variation>GKEEKNWAERN</variation>
    <location>
        <position position="868"/>
    </location>
</feature>
<feature type="splice variant" id="VSP_042170" description="In isoform 5." evidence="62">
    <original>K</original>
    <variation>KPWR</variation>
    <location>
        <position position="903"/>
    </location>
</feature>
<feature type="sequence variant" id="VAR_041682" evidence="23">
    <original>H</original>
    <variation>P</variation>
    <location>
        <position position="292"/>
    </location>
</feature>
<feature type="sequence variant" id="VAR_041683" evidence="23">
    <original>H</original>
    <variation>Q</variation>
    <location>
        <position position="292"/>
    </location>
</feature>
<feature type="sequence variant" id="VAR_041684" description="In a glioblastoma multiforme sample; somatic mutation." evidence="23">
    <original>V</original>
    <variation>A</variation>
    <location>
        <position position="793"/>
    </location>
</feature>
<feature type="sequence variant" id="VAR_041685" evidence="23">
    <original>D</original>
    <variation>E</variation>
    <location>
        <position position="1030"/>
    </location>
</feature>
<feature type="sequence variant" id="VAR_041686" description="In a metastatic melanoma sample; somatic mutation." evidence="23">
    <original>K</original>
    <variation>E</variation>
    <location>
        <position position="1044"/>
    </location>
</feature>
<feature type="mutagenesis site" description="Abolishes autophosphorylation. Abolishes interaction with SRC and activation of BMX. Reduces phosphorylation of NEDD9." evidence="10 58">
    <original>Y</original>
    <variation>F</variation>
    <location>
        <position position="397"/>
    </location>
</feature>
<feature type="mutagenesis site" description="Loss of interaction with TGFB1I1." evidence="60">
    <original>V</original>
    <variation>G</variation>
    <location>
        <position position="928"/>
    </location>
</feature>
<feature type="mutagenesis site" description="Loss of interaction with TGFB1I1." evidence="60">
    <original>L</original>
    <variation>S</variation>
    <location>
        <position position="1034"/>
    </location>
</feature>
<feature type="sequence conflict" description="In Ref. 3; BAG65198." evidence="65" ref="3">
    <original>R</original>
    <variation>L</variation>
    <location>
        <position position="184"/>
    </location>
</feature>
<feature type="sequence conflict" description="In Ref. 3; BAG65198." evidence="65" ref="3">
    <original>L</original>
    <variation>I</variation>
    <location>
        <position position="211"/>
    </location>
</feature>
<feature type="sequence conflict" description="In Ref. 2; AAA35819." evidence="65" ref="2">
    <original>P</original>
    <variation>S</variation>
    <location>
        <position position="778"/>
    </location>
</feature>
<feature type="strand" evidence="76">
    <location>
        <begin position="35"/>
        <end position="40"/>
    </location>
</feature>
<feature type="helix" evidence="76">
    <location>
        <begin position="49"/>
        <end position="51"/>
    </location>
</feature>
<feature type="strand" evidence="76">
    <location>
        <begin position="53"/>
        <end position="58"/>
    </location>
</feature>
<feature type="helix" evidence="76">
    <location>
        <begin position="64"/>
        <end position="73"/>
    </location>
</feature>
<feature type="turn" evidence="76">
    <location>
        <begin position="74"/>
        <end position="76"/>
    </location>
</feature>
<feature type="helix" evidence="76">
    <location>
        <begin position="80"/>
        <end position="82"/>
    </location>
</feature>
<feature type="strand" evidence="76">
    <location>
        <begin position="83"/>
        <end position="89"/>
    </location>
</feature>
<feature type="strand" evidence="76">
    <location>
        <begin position="95"/>
        <end position="98"/>
    </location>
</feature>
<feature type="helix" evidence="76">
    <location>
        <begin position="104"/>
        <end position="114"/>
    </location>
</feature>
<feature type="helix" evidence="76">
    <location>
        <begin position="117"/>
        <end position="119"/>
    </location>
</feature>
<feature type="strand" evidence="76">
    <location>
        <begin position="120"/>
        <end position="126"/>
    </location>
</feature>
<feature type="helix" evidence="76">
    <location>
        <begin position="133"/>
        <end position="137"/>
    </location>
</feature>
<feature type="helix" evidence="76">
    <location>
        <begin position="141"/>
        <end position="158"/>
    </location>
</feature>
<feature type="helix" evidence="76">
    <location>
        <begin position="165"/>
        <end position="179"/>
    </location>
</feature>
<feature type="helix" evidence="76">
    <location>
        <begin position="185"/>
        <end position="187"/>
    </location>
</feature>
<feature type="strand" evidence="76">
    <location>
        <begin position="188"/>
        <end position="190"/>
    </location>
</feature>
<feature type="helix" evidence="76">
    <location>
        <begin position="191"/>
        <end position="194"/>
    </location>
</feature>
<feature type="helix" evidence="76">
    <location>
        <begin position="197"/>
        <end position="201"/>
    </location>
</feature>
<feature type="turn" evidence="76">
    <location>
        <begin position="204"/>
        <end position="206"/>
    </location>
</feature>
<feature type="helix" evidence="76">
    <location>
        <begin position="209"/>
        <end position="214"/>
    </location>
</feature>
<feature type="turn" evidence="76">
    <location>
        <begin position="217"/>
        <end position="219"/>
    </location>
</feature>
<feature type="helix" evidence="76">
    <location>
        <begin position="220"/>
        <end position="228"/>
    </location>
</feature>
<feature type="helix" evidence="76">
    <location>
        <begin position="229"/>
        <end position="231"/>
    </location>
</feature>
<feature type="helix" evidence="76">
    <location>
        <begin position="236"/>
        <end position="247"/>
    </location>
</feature>
<feature type="helix" evidence="76">
    <location>
        <begin position="248"/>
        <end position="250"/>
    </location>
</feature>
<feature type="strand" evidence="76">
    <location>
        <begin position="256"/>
        <end position="262"/>
    </location>
</feature>
<feature type="strand" evidence="76">
    <location>
        <begin position="264"/>
        <end position="266"/>
    </location>
</feature>
<feature type="strand" evidence="76">
    <location>
        <begin position="268"/>
        <end position="275"/>
    </location>
</feature>
<feature type="turn" evidence="76">
    <location>
        <begin position="276"/>
        <end position="278"/>
    </location>
</feature>
<feature type="strand" evidence="76">
    <location>
        <begin position="279"/>
        <end position="283"/>
    </location>
</feature>
<feature type="strand" evidence="76">
    <location>
        <begin position="290"/>
        <end position="294"/>
    </location>
</feature>
<feature type="helix" evidence="76">
    <location>
        <begin position="296"/>
        <end position="298"/>
    </location>
</feature>
<feature type="strand" evidence="76">
    <location>
        <begin position="299"/>
        <end position="306"/>
    </location>
</feature>
<feature type="strand" evidence="76">
    <location>
        <begin position="308"/>
        <end position="311"/>
    </location>
</feature>
<feature type="strand" evidence="76">
    <location>
        <begin position="314"/>
        <end position="320"/>
    </location>
</feature>
<feature type="strand" evidence="76">
    <location>
        <begin position="327"/>
        <end position="333"/>
    </location>
</feature>
<feature type="helix" evidence="76">
    <location>
        <begin position="334"/>
        <end position="351"/>
    </location>
</feature>
<feature type="helix" evidence="74">
    <location>
        <begin position="413"/>
        <end position="415"/>
    </location>
</feature>
<feature type="helix" evidence="78">
    <location>
        <begin position="419"/>
        <end position="421"/>
    </location>
</feature>
<feature type="strand" evidence="78">
    <location>
        <begin position="422"/>
        <end position="431"/>
    </location>
</feature>
<feature type="strand" evidence="78">
    <location>
        <begin position="434"/>
        <end position="441"/>
    </location>
</feature>
<feature type="strand" evidence="79">
    <location>
        <begin position="444"/>
        <end position="446"/>
    </location>
</feature>
<feature type="strand" evidence="78">
    <location>
        <begin position="449"/>
        <end position="455"/>
    </location>
</feature>
<feature type="turn" evidence="78">
    <location>
        <begin position="457"/>
        <end position="460"/>
    </location>
</feature>
<feature type="helix" evidence="78">
    <location>
        <begin position="462"/>
        <end position="476"/>
    </location>
</feature>
<feature type="strand" evidence="78">
    <location>
        <begin position="486"/>
        <end position="490"/>
    </location>
</feature>
<feature type="strand" evidence="78">
    <location>
        <begin position="492"/>
        <end position="494"/>
    </location>
</feature>
<feature type="strand" evidence="78">
    <location>
        <begin position="496"/>
        <end position="500"/>
    </location>
</feature>
<feature type="helix" evidence="78">
    <location>
        <begin position="507"/>
        <end position="513"/>
    </location>
</feature>
<feature type="turn" evidence="78">
    <location>
        <begin position="514"/>
        <end position="517"/>
    </location>
</feature>
<feature type="helix" evidence="78">
    <location>
        <begin position="520"/>
        <end position="539"/>
    </location>
</feature>
<feature type="helix" evidence="78">
    <location>
        <begin position="549"/>
        <end position="551"/>
    </location>
</feature>
<feature type="strand" evidence="78">
    <location>
        <begin position="552"/>
        <end position="556"/>
    </location>
</feature>
<feature type="strand" evidence="78">
    <location>
        <begin position="559"/>
        <end position="562"/>
    </location>
</feature>
<feature type="helix" evidence="78">
    <location>
        <begin position="565"/>
        <end position="568"/>
    </location>
</feature>
<feature type="helix" evidence="75">
    <location>
        <begin position="570"/>
        <end position="573"/>
    </location>
</feature>
<feature type="helix" evidence="75">
    <location>
        <begin position="574"/>
        <end position="576"/>
    </location>
</feature>
<feature type="helix" evidence="78">
    <location>
        <begin position="586"/>
        <end position="588"/>
    </location>
</feature>
<feature type="helix" evidence="78">
    <location>
        <begin position="591"/>
        <end position="596"/>
    </location>
</feature>
<feature type="helix" evidence="78">
    <location>
        <begin position="601"/>
        <end position="616"/>
    </location>
</feature>
<feature type="turn" evidence="74">
    <location>
        <begin position="617"/>
        <end position="619"/>
    </location>
</feature>
<feature type="turn" evidence="78">
    <location>
        <begin position="622"/>
        <end position="625"/>
    </location>
</feature>
<feature type="helix" evidence="78">
    <location>
        <begin position="628"/>
        <end position="636"/>
    </location>
</feature>
<feature type="helix" evidence="78">
    <location>
        <begin position="649"/>
        <end position="658"/>
    </location>
</feature>
<feature type="helix" evidence="78">
    <location>
        <begin position="663"/>
        <end position="665"/>
    </location>
</feature>
<feature type="helix" evidence="78">
    <location>
        <begin position="669"/>
        <end position="685"/>
    </location>
</feature>
<feature type="strand" evidence="73">
    <location>
        <begin position="915"/>
        <end position="917"/>
    </location>
</feature>
<feature type="helix" evidence="80">
    <location>
        <begin position="923"/>
        <end position="939"/>
    </location>
</feature>
<feature type="turn" evidence="77">
    <location>
        <begin position="942"/>
        <end position="944"/>
    </location>
</feature>
<feature type="helix" evidence="80">
    <location>
        <begin position="947"/>
        <end position="971"/>
    </location>
</feature>
<feature type="helix" evidence="80">
    <location>
        <begin position="972"/>
        <end position="974"/>
    </location>
</feature>
<feature type="helix" evidence="80">
    <location>
        <begin position="977"/>
        <end position="979"/>
    </location>
</feature>
<feature type="helix" evidence="80">
    <location>
        <begin position="980"/>
        <end position="1006"/>
    </location>
</feature>
<feature type="turn" evidence="80">
    <location>
        <begin position="1007"/>
        <end position="1009"/>
    </location>
</feature>
<feature type="strand" evidence="80">
    <location>
        <begin position="1010"/>
        <end position="1012"/>
    </location>
</feature>
<feature type="helix" evidence="80">
    <location>
        <begin position="1013"/>
        <end position="1046"/>
    </location>
</feature>
<accession>Q05397</accession>
<accession>B4E2N6</accession>
<accession>F5H4S4</accession>
<accession>J3QT16</accession>
<accession>Q14291</accession>
<accession>Q8IYN9</accession>
<accession>Q9UD85</accession>
<evidence type="ECO:0000250" key="1"/>
<evidence type="ECO:0000250" key="2">
    <source>
        <dbReference type="UniProtKB" id="O35346"/>
    </source>
</evidence>
<evidence type="ECO:0000250" key="3">
    <source>
        <dbReference type="UniProtKB" id="P34152"/>
    </source>
</evidence>
<evidence type="ECO:0000250" key="4">
    <source>
        <dbReference type="UniProtKB" id="Q00944"/>
    </source>
</evidence>
<evidence type="ECO:0000255" key="5">
    <source>
        <dbReference type="PROSITE-ProRule" id="PRU00084"/>
    </source>
</evidence>
<evidence type="ECO:0000255" key="6">
    <source>
        <dbReference type="PROSITE-ProRule" id="PRU00159"/>
    </source>
</evidence>
<evidence type="ECO:0000255" key="7">
    <source>
        <dbReference type="PROSITE-ProRule" id="PRU10028"/>
    </source>
</evidence>
<evidence type="ECO:0000256" key="8">
    <source>
        <dbReference type="SAM" id="MobiDB-lite"/>
    </source>
</evidence>
<evidence type="ECO:0000269" key="9">
    <source>
    </source>
</evidence>
<evidence type="ECO:0000269" key="10">
    <source>
    </source>
</evidence>
<evidence type="ECO:0000269" key="11">
    <source>
    </source>
</evidence>
<evidence type="ECO:0000269" key="12">
    <source>
    </source>
</evidence>
<evidence type="ECO:0000269" key="13">
    <source>
    </source>
</evidence>
<evidence type="ECO:0000269" key="14">
    <source>
    </source>
</evidence>
<evidence type="ECO:0000269" key="15">
    <source>
    </source>
</evidence>
<evidence type="ECO:0000269" key="16">
    <source>
    </source>
</evidence>
<evidence type="ECO:0000269" key="17">
    <source>
    </source>
</evidence>
<evidence type="ECO:0000269" key="18">
    <source>
    </source>
</evidence>
<evidence type="ECO:0000269" key="19">
    <source>
    </source>
</evidence>
<evidence type="ECO:0000269" key="20">
    <source>
    </source>
</evidence>
<evidence type="ECO:0000269" key="21">
    <source>
    </source>
</evidence>
<evidence type="ECO:0000269" key="22">
    <source>
    </source>
</evidence>
<evidence type="ECO:0000269" key="23">
    <source>
    </source>
</evidence>
<evidence type="ECO:0000269" key="24">
    <source>
    </source>
</evidence>
<evidence type="ECO:0000269" key="25">
    <source>
    </source>
</evidence>
<evidence type="ECO:0000269" key="26">
    <source>
    </source>
</evidence>
<evidence type="ECO:0000269" key="27">
    <source>
    </source>
</evidence>
<evidence type="ECO:0000269" key="28">
    <source>
    </source>
</evidence>
<evidence type="ECO:0000269" key="29">
    <source>
    </source>
</evidence>
<evidence type="ECO:0000269" key="30">
    <source>
    </source>
</evidence>
<evidence type="ECO:0000269" key="31">
    <source>
    </source>
</evidence>
<evidence type="ECO:0000269" key="32">
    <source>
    </source>
</evidence>
<evidence type="ECO:0000269" key="33">
    <source>
    </source>
</evidence>
<evidence type="ECO:0000269" key="34">
    <source>
    </source>
</evidence>
<evidence type="ECO:0000269" key="35">
    <source>
    </source>
</evidence>
<evidence type="ECO:0000269" key="36">
    <source>
    </source>
</evidence>
<evidence type="ECO:0000269" key="37">
    <source>
    </source>
</evidence>
<evidence type="ECO:0000269" key="38">
    <source>
    </source>
</evidence>
<evidence type="ECO:0000269" key="39">
    <source>
    </source>
</evidence>
<evidence type="ECO:0000269" key="40">
    <source>
    </source>
</evidence>
<evidence type="ECO:0000269" key="41">
    <source>
    </source>
</evidence>
<evidence type="ECO:0000269" key="42">
    <source>
    </source>
</evidence>
<evidence type="ECO:0000269" key="43">
    <source>
    </source>
</evidence>
<evidence type="ECO:0000269" key="44">
    <source>
    </source>
</evidence>
<evidence type="ECO:0000269" key="45">
    <source>
    </source>
</evidence>
<evidence type="ECO:0000269" key="46">
    <source>
    </source>
</evidence>
<evidence type="ECO:0000269" key="47">
    <source>
    </source>
</evidence>
<evidence type="ECO:0000269" key="48">
    <source>
    </source>
</evidence>
<evidence type="ECO:0000269" key="49">
    <source>
    </source>
</evidence>
<evidence type="ECO:0000269" key="50">
    <source>
    </source>
</evidence>
<evidence type="ECO:0000269" key="51">
    <source>
    </source>
</evidence>
<evidence type="ECO:0000269" key="52">
    <source>
    </source>
</evidence>
<evidence type="ECO:0000269" key="53">
    <source>
    </source>
</evidence>
<evidence type="ECO:0000269" key="54">
    <source>
    </source>
</evidence>
<evidence type="ECO:0000269" key="55">
    <source>
    </source>
</evidence>
<evidence type="ECO:0000269" key="56">
    <source>
    </source>
</evidence>
<evidence type="ECO:0000269" key="57">
    <source>
    </source>
</evidence>
<evidence type="ECO:0000269" key="58">
    <source>
    </source>
</evidence>
<evidence type="ECO:0000269" key="59">
    <source>
    </source>
</evidence>
<evidence type="ECO:0000269" key="60">
    <source>
    </source>
</evidence>
<evidence type="ECO:0000269" key="61">
    <source ref="6"/>
</evidence>
<evidence type="ECO:0000303" key="62">
    <source>
    </source>
</evidence>
<evidence type="ECO:0000303" key="63">
    <source>
    </source>
</evidence>
<evidence type="ECO:0000303" key="64">
    <source>
    </source>
</evidence>
<evidence type="ECO:0000305" key="65"/>
<evidence type="ECO:0000312" key="66">
    <source>
        <dbReference type="HGNC" id="HGNC:9611"/>
    </source>
</evidence>
<evidence type="ECO:0007744" key="67">
    <source>
    </source>
</evidence>
<evidence type="ECO:0007744" key="68">
    <source>
    </source>
</evidence>
<evidence type="ECO:0007744" key="69">
    <source>
    </source>
</evidence>
<evidence type="ECO:0007744" key="70">
    <source>
    </source>
</evidence>
<evidence type="ECO:0007744" key="71">
    <source>
    </source>
</evidence>
<evidence type="ECO:0007744" key="72">
    <source>
    </source>
</evidence>
<evidence type="ECO:0007829" key="73">
    <source>
        <dbReference type="PDB" id="1K04"/>
    </source>
</evidence>
<evidence type="ECO:0007829" key="74">
    <source>
        <dbReference type="PDB" id="4EBV"/>
    </source>
</evidence>
<evidence type="ECO:0007829" key="75">
    <source>
        <dbReference type="PDB" id="4GU6"/>
    </source>
</evidence>
<evidence type="ECO:0007829" key="76">
    <source>
        <dbReference type="PDB" id="4NY0"/>
    </source>
</evidence>
<evidence type="ECO:0007829" key="77">
    <source>
        <dbReference type="PDB" id="6PW8"/>
    </source>
</evidence>
<evidence type="ECO:0007829" key="78">
    <source>
        <dbReference type="PDB" id="6YOJ"/>
    </source>
</evidence>
<evidence type="ECO:0007829" key="79">
    <source>
        <dbReference type="PDB" id="6YVY"/>
    </source>
</evidence>
<evidence type="ECO:0007829" key="80">
    <source>
        <dbReference type="PDB" id="7W8I"/>
    </source>
</evidence>
<sequence>MAAAYLDPNLNHTPNSSTKTHLGTGMERSPGAMERVLKVFHYFESNSEPTTWASIIRHGDATDVRGIIQKIVDSHKVKHVACYGFRLSHLRSEEVHWLHVDMGVSSVREKYELAHPPEEWKYELRIRYLPKGFLNQFTEDKPTLNFFYQQVKSDYMLEIADQVDQEIALKLGCLEIRRSYWEMRGNALEKKSNYEVLEKDVGLKRFFPKSLLDSVKAKTLRKLIQQTFRQFANLNREESILKFFEILSPVYRFDKECFKCALGSSWIISVELAIGPEEGISYLTDKGCNPTHLADFTQVQTIQYSNSEDKDRKGMLQLKIAGAPEPLTVTAPSLTIAENMADLIDGYCRLVNGTSQSFIIRPQKEGERALPSIPKLANSEKQGMRTHAVSVSETDDYAEIIDEEDTYTMPSTRDYEIQRERIELGRCIGEGQFGDVHQGIYMSPENPALAVAIKTCKNCTSDSVREKFLQEALTMRQFDHPHIVKLIGVITENPVWIIMELCTLGELRSFLQVRKYSLDLASLILYAYQLSTALAYLESKRFVHRDIAARNVLVSSNDCVKLGDFGLSRYMEDSTYYKASKGKLPIKWMAPESINFRRFTSASDVWMFGVCMWEILMHGVKPFQGVKNNDVIGRIENGERLPMPPNCPPTLYSLMTKCWAYDPSRRPRFTELKAQLSTILEEEKAQQEERMRMESRRQATVSWDSGGSDEAPPKPSRPGYPSPRSSEGFYPSPQHMVQTNHYQVSGYPGSHGITAMAGSIYPGQASLLDQTDSWNHRPQEIAMWQPNVEDSTVLDLRGIGQVLPTHLMEERLIRQQQEMEEDQRWLEKEERFLKPDVRLSRGSIDREDGSLQGPIGNQHIYQPVGKPDPAAPPKKPPRPGAPGHLGSLASLSSPADSYNEGVKLQPQEISPPPTANLDRSNDKVYENVTGLVKAVIEMSSKIQPAPPEEYVPMVKEVGLALRTLLATVDETIPLLPASTHREIEMAQKLLNSDLGELINKMKLAQQYVMTSLQQEYKKQMLTAAHALAVDAKNLLDVIDQARLKMLGQTRPH</sequence>
<protein>
    <recommendedName>
        <fullName evidence="65">Focal adhesion kinase 1</fullName>
        <shortName>FADK 1</shortName>
        <ecNumber>2.7.10.2</ecNumber>
    </recommendedName>
    <alternativeName>
        <fullName>Focal adhesion kinase-related nonkinase</fullName>
        <shortName>FRNK</shortName>
    </alternativeName>
    <alternativeName>
        <fullName>Protein phosphatase 1 regulatory subunit 71</fullName>
        <shortName>PPP1R71</shortName>
    </alternativeName>
    <alternativeName>
        <fullName>Protein-tyrosine kinase 2</fullName>
    </alternativeName>
    <alternativeName>
        <fullName>p125FAK</fullName>
    </alternativeName>
    <alternativeName>
        <fullName>pp125FAK</fullName>
    </alternativeName>
</protein>
<keyword id="KW-0002">3D-structure</keyword>
<keyword id="KW-0007">Acetylation</keyword>
<keyword id="KW-0877">Alternative promoter usage</keyword>
<keyword id="KW-0025">Alternative splicing</keyword>
<keyword id="KW-0037">Angiogenesis</keyword>
<keyword id="KW-0067">ATP-binding</keyword>
<keyword id="KW-0965">Cell junction</keyword>
<keyword id="KW-1003">Cell membrane</keyword>
<keyword id="KW-0966">Cell projection</keyword>
<keyword id="KW-0963">Cytoplasm</keyword>
<keyword id="KW-0206">Cytoskeleton</keyword>
<keyword id="KW-0217">Developmental protein</keyword>
<keyword id="KW-0903">Direct protein sequencing</keyword>
<keyword id="KW-1017">Isopeptide bond</keyword>
<keyword id="KW-0418">Kinase</keyword>
<keyword id="KW-0472">Membrane</keyword>
<keyword id="KW-0547">Nucleotide-binding</keyword>
<keyword id="KW-0539">Nucleus</keyword>
<keyword id="KW-0597">Phosphoprotein</keyword>
<keyword id="KW-1267">Proteomics identification</keyword>
<keyword id="KW-1185">Reference proteome</keyword>
<keyword id="KW-0808">Transferase</keyword>
<keyword id="KW-0829">Tyrosine-protein kinase</keyword>
<keyword id="KW-0832">Ubl conjugation</keyword>
<comment type="function">
    <text evidence="9 10 11 16 17 19 21 22 24 25 26 27 29 30 31 33 35 37 38 39 46 48 50 58">Non-receptor protein-tyrosine kinase that plays an essential role in regulating cell migration, adhesion, spreading, reorganization of the actin cytoskeleton, formation and disassembly of focal adhesions and cell protrusions, cell cycle progression, cell proliferation and apoptosis. Required for early embryonic development and placenta development. Required for embryonic angiogenesis, normal cardiomyocyte migration and proliferation, and normal heart development. Regulates axon growth and neuronal cell migration, axon branching and synapse formation; required for normal development of the nervous system. Plays a role in osteogenesis and differentiation of osteoblasts. Functions in integrin signal transduction, but also in signaling downstream of numerous growth factor receptors, G-protein coupled receptors (GPCR), EPHA2, netrin receptors and LDL receptors. Forms multisubunit signaling complexes with SRC and SRC family members upon activation; this leads to the phosphorylation of additional tyrosine residues, creating binding sites for scaffold proteins, effectors and substrates. Regulates numerous signaling pathways. Promotes activation of phosphatidylinositol 3-kinase and the AKT1 signaling cascade. Promotes activation of MAPK1/ERK2, MAPK3/ERK1 and the MAP kinase signaling cascade. Promotes localized and transient activation of guanine nucleotide exchange factors (GEFs) and GTPase-activating proteins (GAPs), and thereby modulates the activity of Rho family GTPases. Signaling via CAS family members mediates activation of RAC1. Phosphorylates NEDD9 following integrin stimulation (PubMed:9360983). Recruits the ubiquitin ligase MDM2 to P53/TP53 in the nucleus, and thereby regulates P53/TP53 activity, P53/TP53 ubiquitination and proteasomal degradation. Phosphorylates SRC; this increases SRC kinase activity. Phosphorylates ACTN1, ARHGEF7, GRB7, RET and WASL. Promotes phosphorylation of PXN and STAT1; most likely PXN and STAT1 are phosphorylated by a SRC family kinase that is recruited to autophosphorylated PTK2/FAK1, rather than by PTK2/FAK1 itself. Promotes phosphorylation of BCAR1; GIT2 and SHC1; this requires both SRC and PTK2/FAK1. Promotes phosphorylation of BMX and PIK3R1. Isoform 6 (FRNK) does not contain a kinase domain and inhibits PTK2/FAK1 phosphorylation and signaling. Its enhanced expression can attenuate the nuclear accumulation of LPXN and limit its ability to enhance serum response factor (SRF)-dependent gene transcription.</text>
</comment>
<comment type="function">
    <molecule>Isoform 6</molecule>
    <text evidence="45">Isoform 6 (FRNK) does not contain a kinase domain and inhibits PTK2/FAK1 phosphorylation and signaling. Its enhanced expression can attenuate the nuclear accumulation of LPXN and limit its ability to enhance serum response factor (SRF)-dependent gene transcription.</text>
</comment>
<comment type="catalytic activity">
    <reaction evidence="7 9 10 32">
        <text>L-tyrosyl-[protein] + ATP = O-phospho-L-tyrosyl-[protein] + ADP + H(+)</text>
        <dbReference type="Rhea" id="RHEA:10596"/>
        <dbReference type="Rhea" id="RHEA-COMP:10136"/>
        <dbReference type="Rhea" id="RHEA-COMP:20101"/>
        <dbReference type="ChEBI" id="CHEBI:15378"/>
        <dbReference type="ChEBI" id="CHEBI:30616"/>
        <dbReference type="ChEBI" id="CHEBI:46858"/>
        <dbReference type="ChEBI" id="CHEBI:61978"/>
        <dbReference type="ChEBI" id="CHEBI:456216"/>
        <dbReference type="EC" id="2.7.10.2"/>
    </reaction>
</comment>
<comment type="activity regulation">
    <text evidence="9 24 25 27 35 48">Subject to autoinhibition, mediated by interactions between the FERM domain and the kinase domain. Activated by autophosphorylation at Tyr-397. This promotes interaction with SRC and phosphorylation at Tyr-576 and Tyr-577 in the kinase activation loop. Phosphorylation at Tyr-576 and Tyr-577 is required for maximal kinase activity. Inhibited by TAC544, TAE226, PF-573,228 and PF-562,271.</text>
</comment>
<comment type="subunit">
    <text evidence="3 9 10 11 12 13 14 15 18 20 28 30 31 32 33 34 36 40 41 42 43 44 47 49 50 51 52 53 58 59 60">Interacts (via first Pro-rich region) with CAS family members (via SH3 domain), including BCAR1, BCAR3, and CASS4. Interacts with NEDD9 (via SH3 domain) (PubMed:9360983). Interacts with GIT1. Interacts with SORBS1. Interacts with ARHGEF28. Interacts with SHB. Part of a complex composed of THSD1, PTK2/FAK1, TLN1 and VCL (PubMed:29069646). Interacts with PXN and TLN1. Interacts with STAT1. Interacts with DCC. Interacts with WASL. Interacts with ARHGEF7. Interacts with GRB2 and GRB7 (By similarity). Component of a complex that contains at least FER, CTTN and PTK2/FAK1. Interacts with BMX. Interacts with TGFB1I1. Interacts with STEAP4. Interacts with ZFYVE21. Interacts with ESR1. Interacts with PIK3R1 or PIK3R2. Interacts with SRC, FGR, FLT4 and RET. Interacts with EPHA2 in resting cells; activation of EPHA2 recruits PTPN11, leading to dephosphorylation of PTK2/FAK1 and dissociation of the complex. Interacts with EPHA1 (kinase activity-dependent). Interacts with CD4; this interaction requires the presence of HIV-1 gp120. Interacts with PIAS1. Interacts with ARHGAP26 and SHC1. Interacts with RB1CC1; this inhibits PTK2/FAK1 activity and activation of downstream signaling pathways. Interacts with P53/TP53 and MDM2. Interacts with LPXN (via LD motif 3). Interacts with MISP. Interacts with CIB1 isoform 2. Interacts with CD36. Interacts with EMP2; regulates PTK2 activation and localization (PubMed:19494199). Interacts with DSCAM (By similarity). Interacts with AMBRA1 (By similarity). Interacts (when tyrosine-phosphorylated) with tensin TNS1; the interaction is increased by phosphorylation of TNS1 (PubMed:20798394).</text>
</comment>
<comment type="interaction">
    <interactant intactId="EBI-702142">
        <id>Q05397</id>
    </interactant>
    <interactant intactId="EBI-702093">
        <id>P56945</id>
        <label>BCAR1</label>
    </interactant>
    <organismsDiffer>false</organismsDiffer>
    <experiments>2</experiments>
</comment>
<comment type="interaction">
    <interactant intactId="EBI-702142">
        <id>Q05397</id>
    </interactant>
    <interactant intactId="EBI-886">
        <id>P46108</id>
        <label>CRK</label>
    </interactant>
    <organismsDiffer>false</organismsDiffer>
    <experiments>3</experiments>
</comment>
<comment type="interaction">
    <interactant intactId="EBI-702142">
        <id>Q05397</id>
    </interactant>
    <interactant intactId="EBI-297353">
        <id>P00533</id>
        <label>EGFR</label>
    </interactant>
    <organismsDiffer>false</organismsDiffer>
    <experiments>7</experiments>
</comment>
<comment type="interaction">
    <interactant intactId="EBI-702142">
        <id>Q05397</id>
    </interactant>
    <interactant intactId="EBI-702104">
        <id>P29317</id>
        <label>EPHA2</label>
    </interactant>
    <organismsDiffer>false</organismsDiffer>
    <experiments>3</experiments>
</comment>
<comment type="interaction">
    <interactant intactId="EBI-702142">
        <id>Q05397</id>
    </interactant>
    <interactant intactId="EBI-515315">
        <id>P06241</id>
        <label>FYN</label>
    </interactant>
    <organismsDiffer>false</organismsDiffer>
    <experiments>3</experiments>
</comment>
<comment type="interaction">
    <interactant intactId="EBI-702142">
        <id>Q05397</id>
    </interactant>
    <interactant intactId="EBI-401755">
        <id>P62993</id>
        <label>GRB2</label>
    </interactant>
    <organismsDiffer>false</organismsDiffer>
    <experiments>4</experiments>
</comment>
<comment type="interaction">
    <interactant intactId="EBI-702142">
        <id>Q05397</id>
    </interactant>
    <interactant intactId="EBI-970191">
        <id>Q14451</id>
        <label>GRB7</label>
    </interactant>
    <organismsDiffer>false</organismsDiffer>
    <experiments>3</experiments>
</comment>
<comment type="interaction">
    <interactant intactId="EBI-702142">
        <id>Q05397</id>
    </interactant>
    <interactant intactId="EBI-9834454">
        <id>P08631-2</id>
        <label>HCK</label>
    </interactant>
    <organismsDiffer>false</organismsDiffer>
    <experiments>2</experiments>
</comment>
<comment type="interaction">
    <interactant intactId="EBI-702142">
        <id>Q05397</id>
    </interactant>
    <interactant intactId="EBI-948678">
        <id>P16144</id>
        <label>ITGB4</label>
    </interactant>
    <organismsDiffer>false</organismsDiffer>
    <experiments>7</experiments>
</comment>
<comment type="interaction">
    <interactant intactId="EBI-702142">
        <id>Q05397</id>
    </interactant>
    <interactant intactId="EBI-744222">
        <id>O60711</id>
        <label>LPXN</label>
    </interactant>
    <organismsDiffer>false</organismsDiffer>
    <experiments>4</experiments>
</comment>
<comment type="interaction">
    <interactant intactId="EBI-702142">
        <id>Q05397</id>
    </interactant>
    <interactant intactId="EBI-79893">
        <id>Q92569</id>
        <label>PIK3R3</label>
    </interactant>
    <organismsDiffer>false</organismsDiffer>
    <experiments>3</experiments>
</comment>
<comment type="interaction">
    <interactant intactId="EBI-702142">
        <id>Q05397</id>
    </interactant>
    <interactant intactId="EBI-3906092">
        <id>P25105</id>
        <label>PTAFR</label>
    </interactant>
    <organismsDiffer>false</organismsDiffer>
    <experiments>2</experiments>
</comment>
<comment type="interaction">
    <interactant intactId="EBI-702142">
        <id>Q05397</id>
    </interactant>
    <interactant intactId="EBI-297779">
        <id>Q06124</id>
        <label>PTPN11</label>
    </interactant>
    <organismsDiffer>false</organismsDiffer>
    <experiments>6</experiments>
</comment>
<comment type="interaction">
    <interactant intactId="EBI-702142">
        <id>Q05397</id>
    </interactant>
    <interactant intactId="EBI-724478">
        <id>Q9H3S7</id>
        <label>PTPN23</label>
    </interactant>
    <organismsDiffer>false</organismsDiffer>
    <experiments>4</experiments>
</comment>
<comment type="interaction">
    <interactant intactId="EBI-702142">
        <id>Q05397</id>
    </interactant>
    <interactant intactId="EBI-7399369">
        <id>P29350-3</id>
        <label>PTPN6</label>
    </interactant>
    <organismsDiffer>false</organismsDiffer>
    <experiments>3</experiments>
</comment>
<comment type="interaction">
    <interactant intactId="EBI-702142">
        <id>Q05397</id>
    </interactant>
    <interactant intactId="EBI-1056751">
        <id>Q9Y3E5</id>
        <label>PTRH2</label>
    </interactant>
    <organismsDiffer>false</organismsDiffer>
    <experiments>2</experiments>
</comment>
<comment type="interaction">
    <interactant intactId="EBI-702142">
        <id>Q05397</id>
    </interactant>
    <interactant intactId="EBI-702209">
        <id>P49023</id>
        <label>PXN</label>
    </interactant>
    <organismsDiffer>false</organismsDiffer>
    <experiments>19</experiments>
</comment>
<comment type="interaction">
    <interactant intactId="EBI-702142">
        <id>Q05397</id>
    </interactant>
    <interactant intactId="EBI-490630">
        <id>Q9NP31</id>
        <label>SH2D2A</label>
    </interactant>
    <organismsDiffer>false</organismsDiffer>
    <experiments>3</experiments>
</comment>
<comment type="interaction">
    <interactant intactId="EBI-702142">
        <id>Q05397</id>
    </interactant>
    <interactant intactId="EBI-621482">
        <id>P12931</id>
        <label>SRC</label>
    </interactant>
    <organismsDiffer>false</organismsDiffer>
    <experiments>9</experiments>
</comment>
<comment type="interaction">
    <interactant intactId="EBI-702142">
        <id>Q05397</id>
    </interactant>
    <interactant intactId="EBI-539478">
        <id>Q96SB4</id>
        <label>SRPK1</label>
    </interactant>
    <organismsDiffer>false</organismsDiffer>
    <experiments>2</experiments>
</comment>
<comment type="interaction">
    <interactant intactId="EBI-702142">
        <id>Q05397</id>
    </interactant>
    <interactant intactId="EBI-1057697">
        <id>P42224</id>
        <label>STAT1</label>
    </interactant>
    <organismsDiffer>false</organismsDiffer>
    <experiments>3</experiments>
</comment>
<comment type="interaction">
    <interactant intactId="EBI-702142">
        <id>Q05397</id>
    </interactant>
    <interactant intactId="EBI-1051449">
        <id>O43294</id>
        <label>TGFB1I1</label>
    </interactant>
    <organismsDiffer>false</organismsDiffer>
    <experiments>3</experiments>
</comment>
<comment type="interaction">
    <interactant intactId="EBI-702142">
        <id>Q05397</id>
    </interactant>
    <interactant intactId="EBI-1220488">
        <id>Q68CZ2</id>
        <label>TNS3</label>
    </interactant>
    <organismsDiffer>false</organismsDiffer>
    <experiments>3</experiments>
</comment>
<comment type="interaction">
    <interactant intactId="EBI-702142">
        <id>Q05397</id>
    </interactant>
    <interactant intactId="EBI-366083">
        <id>P04637</id>
        <label>TP53</label>
    </interactant>
    <organismsDiffer>false</organismsDiffer>
    <experiments>13</experiments>
</comment>
<comment type="interaction">
    <interactant intactId="EBI-702142">
        <id>Q05397</id>
    </interactant>
    <interactant intactId="EBI-26494126">
        <id>Q824H6</id>
        <label>CCA_00170</label>
    </interactant>
    <organismsDiffer>true</organismsDiffer>
    <experiments>3</experiments>
</comment>
<comment type="interaction">
    <interactant intactId="EBI-702142">
        <id>Q05397</id>
    </interactant>
    <interactant intactId="EBI-298680">
        <id>P05480</id>
        <label>Src</label>
    </interactant>
    <organismsDiffer>true</organismsDiffer>
    <experiments>5</experiments>
</comment>
<comment type="interaction">
    <interactant intactId="EBI-702142">
        <id>Q05397</id>
    </interactant>
    <interactant intactId="EBI-642844">
        <id>Q62219</id>
        <label>Tgfb1i1</label>
    </interactant>
    <organismsDiffer>true</organismsDiffer>
    <experiments>3</experiments>
</comment>
<comment type="subcellular location">
    <subcellularLocation>
        <location evidence="9 18 29 30 54">Cell junction</location>
        <location evidence="9 18 29 30 54">Focal adhesion</location>
    </subcellularLocation>
    <subcellularLocation>
        <location evidence="4">Cell membrane</location>
        <topology evidence="4">Peripheral membrane protein</topology>
        <orientation evidence="4">Cytoplasmic side</orientation>
    </subcellularLocation>
    <subcellularLocation>
        <location evidence="18">Cytoplasm</location>
        <location evidence="18">Perinuclear region</location>
    </subcellularLocation>
    <subcellularLocation>
        <location>Cytoplasm</location>
        <location>Cell cortex</location>
    </subcellularLocation>
    <subcellularLocation>
        <location evidence="2">Cytoplasm</location>
        <location evidence="2">Cytoskeleton</location>
    </subcellularLocation>
    <subcellularLocation>
        <location evidence="1">Cytoplasm</location>
        <location evidence="1">Cytoskeleton</location>
        <location evidence="1">Microtubule organizing center</location>
        <location evidence="1">Centrosome</location>
    </subcellularLocation>
    <subcellularLocation>
        <location evidence="18 29">Nucleus</location>
    </subcellularLocation>
    <subcellularLocation>
        <location evidence="54">Cytoplasm</location>
        <location evidence="54">Cytoskeleton</location>
        <location evidence="54">Cilium basal body</location>
    </subcellularLocation>
    <subcellularLocation>
        <location evidence="18 28 29 30">Cytoplasm</location>
    </subcellularLocation>
    <text evidence="3">Constituent of focal adhesions. Detected at microtubules.</text>
</comment>
<comment type="alternative products">
    <event type="alternative promoter"/>
    <event type="alternative splicing"/>
    <isoform>
        <id>Q05397-1</id>
        <name>1</name>
        <sequence type="displayed"/>
    </isoform>
    <isoform>
        <id>Q05397-2</id>
        <name>2</name>
        <sequence type="described" ref="VSP_004967 VSP_004968 VSP_004969 VSP_004970"/>
    </isoform>
    <isoform>
        <id>Q05397-3</id>
        <name>3</name>
        <sequence type="described" ref="VSP_004967 VSP_004968 VSP_004969 VSP_004973 VSP_004974"/>
    </isoform>
    <isoform>
        <id>Q05397-4</id>
        <name>4</name>
        <sequence type="described" ref="VSP_004967 VSP_004968 VSP_004969 VSP_004971 VSP_004972"/>
    </isoform>
    <isoform>
        <id>Q05397-5</id>
        <name>5</name>
        <sequence type="described" ref="VSP_042169 VSP_042170"/>
    </isoform>
    <isoform>
        <id>Q05397-6</id>
        <name>6</name>
        <name>FRNK</name>
        <sequence type="described" ref="VSP_042168"/>
    </isoform>
    <isoform>
        <id>Q05397-7</id>
        <name>7</name>
        <sequence type="described" ref="VSP_057268"/>
    </isoform>
</comment>
<comment type="tissue specificity">
    <text evidence="45 54 55 56 57">Detected in B and T-lymphocytes. Isoform 1 and isoform 6 are detected in lung fibroblasts (at protein level). Ubiquitous. Expressed in epithelial cells (at protein level) (PubMed:31630787).</text>
</comment>
<comment type="developmental stage">
    <molecule>Isoform 6</molecule>
    <text evidence="45">Detected in cultured cells, immediately after seeding and before formation of focal adhesions (at protein level).</text>
</comment>
<comment type="domain">
    <text>The Pro-rich regions interact with the SH3 domain of CAS family members, such as BCAR1 and NEDD9, and with the GTPase activating protein ARHGAP26.</text>
</comment>
<comment type="domain">
    <text>The C-terminal region is the site of focal adhesion targeting (FAT) sequence which mediates the localization of FAK1 to focal adhesions.</text>
</comment>
<comment type="PTM">
    <text evidence="3 13 17 24 25 27 40 50">Phosphorylated on tyrosine residues upon activation, e.g. upon integrin signaling. Tyr-397 is the major autophosphorylation site, but other kinases can also phosphorylate this residue. Phosphorylation at Tyr-397 promotes interaction with SRC and SRC family members, leading to phosphorylation at Tyr-576, Tyr-577 and at additional tyrosine residues. FGR promotes phosphorylation at Tyr-397 and Tyr-576. FER promotes phosphorylation at Tyr-577, Tyr-861 and Tyr-925, even when cells are not adherent. Tyr-397, Tyr-576 and Ser-722 are phosphorylated only when cells are adherent. Phosphorylation at Tyr-397 is important for interaction with BMX, PIK3R1 and SHC1. Phosphorylation at Tyr-925 is important for interaction with GRB2. Dephosphorylated by PTPN11; PTPN11 is recruited to PTK2 via EPHA2 (tyrosine phosphorylated). Microtubule-induced dephosphorylation at Tyr-397 is crucial for the induction of focal adhesion disassembly; this dephosphorylation could be catalyzed by PTPN11 and regulated by ZFYVE21. Phosphorylation on tyrosine residues is enhanced by NTN1 (By similarity).</text>
</comment>
<comment type="PTM">
    <text evidence="1">Sumoylated; this enhances autophosphorylation.</text>
</comment>
<comment type="disease">
    <text>Aberrant PTK2/FAK1 expression may play a role in cancer cell proliferation, migration and invasion, in tumor formation and metastasis. PTK2/FAK1 overexpression is seen in many types of cancer.</text>
</comment>
<comment type="miscellaneous">
    <molecule>Isoform 6</molecule>
    <text evidence="65">Produced by alternative promoter usage.</text>
</comment>
<comment type="similarity">
    <text evidence="6">Belongs to the protein kinase superfamily. Tyr protein kinase family. FAK subfamily.</text>
</comment>
<comment type="online information" name="Atlas of Genetics and Cytogenetics in Oncology and Haematology">
    <link uri="https://atlasgeneticsoncology.org/gene/41898/PTK2"/>
</comment>
<reference key="1">
    <citation type="journal article" date="1993" name="DNA Cell Biol.">
        <title>Human T and B lymphocytes express a structurally conserved focal adhesion kinase, pp125FAK.</title>
        <authorList>
            <person name="Whitney G.S."/>
            <person name="Chan P.Y."/>
            <person name="Blake J."/>
            <person name="Cosand W.L."/>
            <person name="Neubauer M.G."/>
            <person name="Aruffo A."/>
            <person name="Kanner S.B."/>
        </authorList>
    </citation>
    <scope>NUCLEOTIDE SEQUENCE [MRNA] (ISOFORM 1)</scope>
    <scope>TISSUE SPECIFICITY</scope>
    <source>
        <tissue>T-cell</tissue>
    </source>
</reference>
<reference key="2">
    <citation type="journal article" date="1993" name="Biochem. Biophys. Res. Commun.">
        <title>Expression of an N-terminally truncated form of human focal adhesion kinase in brain.</title>
        <authorList>
            <person name="Andre E."/>
            <person name="Becker-Andre M."/>
        </authorList>
    </citation>
    <scope>NUCLEOTIDE SEQUENCE [MRNA] (ISOFORMS 2; 3 AND 4)</scope>
    <scope>TISSUE SPECIFICITY</scope>
    <source>
        <tissue>Brain</tissue>
    </source>
</reference>
<reference key="3">
    <citation type="journal article" date="2004" name="Nat. Genet.">
        <title>Complete sequencing and characterization of 21,243 full-length human cDNAs.</title>
        <authorList>
            <person name="Ota T."/>
            <person name="Suzuki Y."/>
            <person name="Nishikawa T."/>
            <person name="Otsuki T."/>
            <person name="Sugiyama T."/>
            <person name="Irie R."/>
            <person name="Wakamatsu A."/>
            <person name="Hayashi K."/>
            <person name="Sato H."/>
            <person name="Nagai K."/>
            <person name="Kimura K."/>
            <person name="Makita H."/>
            <person name="Sekine M."/>
            <person name="Obayashi M."/>
            <person name="Nishi T."/>
            <person name="Shibahara T."/>
            <person name="Tanaka T."/>
            <person name="Ishii S."/>
            <person name="Yamamoto J."/>
            <person name="Saito K."/>
            <person name="Kawai Y."/>
            <person name="Isono Y."/>
            <person name="Nakamura Y."/>
            <person name="Nagahari K."/>
            <person name="Murakami K."/>
            <person name="Yasuda T."/>
            <person name="Iwayanagi T."/>
            <person name="Wagatsuma M."/>
            <person name="Shiratori A."/>
            <person name="Sudo H."/>
            <person name="Hosoiri T."/>
            <person name="Kaku Y."/>
            <person name="Kodaira H."/>
            <person name="Kondo H."/>
            <person name="Sugawara M."/>
            <person name="Takahashi M."/>
            <person name="Kanda K."/>
            <person name="Yokoi T."/>
            <person name="Furuya T."/>
            <person name="Kikkawa E."/>
            <person name="Omura Y."/>
            <person name="Abe K."/>
            <person name="Kamihara K."/>
            <person name="Katsuta N."/>
            <person name="Sato K."/>
            <person name="Tanikawa M."/>
            <person name="Yamazaki M."/>
            <person name="Ninomiya K."/>
            <person name="Ishibashi T."/>
            <person name="Yamashita H."/>
            <person name="Murakawa K."/>
            <person name="Fujimori K."/>
            <person name="Tanai H."/>
            <person name="Kimata M."/>
            <person name="Watanabe M."/>
            <person name="Hiraoka S."/>
            <person name="Chiba Y."/>
            <person name="Ishida S."/>
            <person name="Ono Y."/>
            <person name="Takiguchi S."/>
            <person name="Watanabe S."/>
            <person name="Yosida M."/>
            <person name="Hotuta T."/>
            <person name="Kusano J."/>
            <person name="Kanehori K."/>
            <person name="Takahashi-Fujii A."/>
            <person name="Hara H."/>
            <person name="Tanase T.-O."/>
            <person name="Nomura Y."/>
            <person name="Togiya S."/>
            <person name="Komai F."/>
            <person name="Hara R."/>
            <person name="Takeuchi K."/>
            <person name="Arita M."/>
            <person name="Imose N."/>
            <person name="Musashino K."/>
            <person name="Yuuki H."/>
            <person name="Oshima A."/>
            <person name="Sasaki N."/>
            <person name="Aotsuka S."/>
            <person name="Yoshikawa Y."/>
            <person name="Matsunawa H."/>
            <person name="Ichihara T."/>
            <person name="Shiohata N."/>
            <person name="Sano S."/>
            <person name="Moriya S."/>
            <person name="Momiyama H."/>
            <person name="Satoh N."/>
            <person name="Takami S."/>
            <person name="Terashima Y."/>
            <person name="Suzuki O."/>
            <person name="Nakagawa S."/>
            <person name="Senoh A."/>
            <person name="Mizoguchi H."/>
            <person name="Goto Y."/>
            <person name="Shimizu F."/>
            <person name="Wakebe H."/>
            <person name="Hishigaki H."/>
            <person name="Watanabe T."/>
            <person name="Sugiyama A."/>
            <person name="Takemoto M."/>
            <person name="Kawakami B."/>
            <person name="Yamazaki M."/>
            <person name="Watanabe K."/>
            <person name="Kumagai A."/>
            <person name="Itakura S."/>
            <person name="Fukuzumi Y."/>
            <person name="Fujimori Y."/>
            <person name="Komiyama M."/>
            <person name="Tashiro H."/>
            <person name="Tanigami A."/>
            <person name="Fujiwara T."/>
            <person name="Ono T."/>
            <person name="Yamada K."/>
            <person name="Fujii Y."/>
            <person name="Ozaki K."/>
            <person name="Hirao M."/>
            <person name="Ohmori Y."/>
            <person name="Kawabata A."/>
            <person name="Hikiji T."/>
            <person name="Kobatake N."/>
            <person name="Inagaki H."/>
            <person name="Ikema Y."/>
            <person name="Okamoto S."/>
            <person name="Okitani R."/>
            <person name="Kawakami T."/>
            <person name="Noguchi S."/>
            <person name="Itoh T."/>
            <person name="Shigeta K."/>
            <person name="Senba T."/>
            <person name="Matsumura K."/>
            <person name="Nakajima Y."/>
            <person name="Mizuno T."/>
            <person name="Morinaga M."/>
            <person name="Sasaki M."/>
            <person name="Togashi T."/>
            <person name="Oyama M."/>
            <person name="Hata H."/>
            <person name="Watanabe M."/>
            <person name="Komatsu T."/>
            <person name="Mizushima-Sugano J."/>
            <person name="Satoh T."/>
            <person name="Shirai Y."/>
            <person name="Takahashi Y."/>
            <person name="Nakagawa K."/>
            <person name="Okumura K."/>
            <person name="Nagase T."/>
            <person name="Nomura N."/>
            <person name="Kikuchi H."/>
            <person name="Masuho Y."/>
            <person name="Yamashita R."/>
            <person name="Nakai K."/>
            <person name="Yada T."/>
            <person name="Nakamura Y."/>
            <person name="Ohara O."/>
            <person name="Isogai T."/>
            <person name="Sugano S."/>
        </authorList>
    </citation>
    <scope>NUCLEOTIDE SEQUENCE [LARGE SCALE MRNA] (ISOFORM 5)</scope>
    <source>
        <tissue>Trachea</tissue>
    </source>
</reference>
<reference key="4">
    <citation type="journal article" date="2006" name="Nature">
        <title>DNA sequence and analysis of human chromosome 8.</title>
        <authorList>
            <person name="Nusbaum C."/>
            <person name="Mikkelsen T.S."/>
            <person name="Zody M.C."/>
            <person name="Asakawa S."/>
            <person name="Taudien S."/>
            <person name="Garber M."/>
            <person name="Kodira C.D."/>
            <person name="Schueler M.G."/>
            <person name="Shimizu A."/>
            <person name="Whittaker C.A."/>
            <person name="Chang J.L."/>
            <person name="Cuomo C.A."/>
            <person name="Dewar K."/>
            <person name="FitzGerald M.G."/>
            <person name="Yang X."/>
            <person name="Allen N.R."/>
            <person name="Anderson S."/>
            <person name="Asakawa T."/>
            <person name="Blechschmidt K."/>
            <person name="Bloom T."/>
            <person name="Borowsky M.L."/>
            <person name="Butler J."/>
            <person name="Cook A."/>
            <person name="Corum B."/>
            <person name="DeArellano K."/>
            <person name="DeCaprio D."/>
            <person name="Dooley K.T."/>
            <person name="Dorris L. III"/>
            <person name="Engels R."/>
            <person name="Gloeckner G."/>
            <person name="Hafez N."/>
            <person name="Hagopian D.S."/>
            <person name="Hall J.L."/>
            <person name="Ishikawa S.K."/>
            <person name="Jaffe D.B."/>
            <person name="Kamat A."/>
            <person name="Kudoh J."/>
            <person name="Lehmann R."/>
            <person name="Lokitsang T."/>
            <person name="Macdonald P."/>
            <person name="Major J.E."/>
            <person name="Matthews C.D."/>
            <person name="Mauceli E."/>
            <person name="Menzel U."/>
            <person name="Mihalev A.H."/>
            <person name="Minoshima S."/>
            <person name="Murayama Y."/>
            <person name="Naylor J.W."/>
            <person name="Nicol R."/>
            <person name="Nguyen C."/>
            <person name="O'Leary S.B."/>
            <person name="O'Neill K."/>
            <person name="Parker S.C.J."/>
            <person name="Polley A."/>
            <person name="Raymond C.K."/>
            <person name="Reichwald K."/>
            <person name="Rodriguez J."/>
            <person name="Sasaki T."/>
            <person name="Schilhabel M."/>
            <person name="Siddiqui R."/>
            <person name="Smith C.L."/>
            <person name="Sneddon T.P."/>
            <person name="Talamas J.A."/>
            <person name="Tenzin P."/>
            <person name="Topham K."/>
            <person name="Venkataraman V."/>
            <person name="Wen G."/>
            <person name="Yamazaki S."/>
            <person name="Young S.K."/>
            <person name="Zeng Q."/>
            <person name="Zimmer A.R."/>
            <person name="Rosenthal A."/>
            <person name="Birren B.W."/>
            <person name="Platzer M."/>
            <person name="Shimizu N."/>
            <person name="Lander E.S."/>
        </authorList>
    </citation>
    <scope>NUCLEOTIDE SEQUENCE [LARGE SCALE GENOMIC DNA]</scope>
</reference>
<reference key="5">
    <citation type="journal article" date="2004" name="Genome Res.">
        <title>The status, quality, and expansion of the NIH full-length cDNA project: the Mammalian Gene Collection (MGC).</title>
        <authorList>
            <consortium name="The MGC Project Team"/>
        </authorList>
    </citation>
    <scope>NUCLEOTIDE SEQUENCE [LARGE SCALE MRNA] (ISOFORM 7)</scope>
    <source>
        <tissue>Placenta</tissue>
    </source>
</reference>
<reference key="6">
    <citation type="submission" date="2007-07" db="UniProtKB">
        <authorList>
            <person name="Bienvenut W.V."/>
            <person name="Glen H."/>
            <person name="Brunton V.G."/>
            <person name="Frame M.C."/>
        </authorList>
    </citation>
    <scope>PROTEIN SEQUENCE OF 2-19; 192-199; 222-236; 243-252; 350-364; 414-419; 468-476; 562-569; 674-690; 798-811; 832-838; 904-933; 963-981; 989-1000 AND 1003-1042</scope>
    <scope>CLEAVAGE OF INITIATOR METHIONINE</scope>
    <scope>ACETYLATION AT ALA-2</scope>
    <scope>IDENTIFICATION BY MASS SPECTROMETRY</scope>
    <source>
        <tissue>Osteosarcoma</tissue>
    </source>
</reference>
<reference key="7">
    <citation type="journal article" date="1993" name="Oncogene">
        <title>A survey of protein tyrosine kinase mRNAs expressed in normal human melanocytes.</title>
        <authorList>
            <person name="Lee S.-T."/>
            <person name="Strunk K.M."/>
            <person name="Spritz R.A."/>
        </authorList>
    </citation>
    <scope>NUCLEOTIDE SEQUENCE [MRNA] OF 552-602</scope>
    <scope>TISSUE SPECIFICITY</scope>
    <source>
        <tissue>Melanocyte</tissue>
    </source>
</reference>
<reference key="8">
    <citation type="journal article" date="1997" name="J. Biol. Chem.">
        <title>Tyrosine phosphorylation of Crk-associated substrates by focal adhesion kinase. A putative mechanism for the integrin-mediated tyrosine phosphorylation of Crk-associated substrates.</title>
        <authorList>
            <person name="Tachibana K."/>
            <person name="Urano T."/>
            <person name="Fujita H."/>
            <person name="Ohashi Y."/>
            <person name="Kamiguchi K."/>
            <person name="Iwata S."/>
            <person name="Hirai H."/>
            <person name="Morimoto C."/>
        </authorList>
    </citation>
    <scope>FUNCTION</scope>
    <scope>INTERACTION WITH NEDD9</scope>
    <scope>MUTAGENESIS OF TYR-397</scope>
</reference>
<reference key="9">
    <citation type="journal article" date="1998" name="J. Biol. Chem.">
        <title>Cell adhesion kinase beta forms a complex with a new member, Hic-5, of proteins localized at focal adhesions.</title>
        <authorList>
            <person name="Matsuya M."/>
            <person name="Sasaki H."/>
            <person name="Aoto H."/>
            <person name="Mitaka T."/>
            <person name="Nagura K."/>
            <person name="Ohba T."/>
            <person name="Ishino M."/>
            <person name="Takahashi S."/>
            <person name="Suzuki R."/>
            <person name="Sasaki T."/>
        </authorList>
    </citation>
    <scope>INTERACTION WITH TGFB1I1</scope>
</reference>
<reference key="10">
    <citation type="journal article" date="1998" name="J. Biol. Chem.">
        <title>Interaction of Hic-5, A senescence-related protein, with focal adhesion kinase.</title>
        <authorList>
            <person name="Fujita H."/>
            <person name="Kamiguchi K."/>
            <person name="Cho D."/>
            <person name="Shibanuma M."/>
            <person name="Morimoto C."/>
            <person name="Tachibana K."/>
        </authorList>
    </citation>
    <scope>INTERACTION WITH TGFB1I1</scope>
    <scope>MUTAGENESIS OF VAL-928 AND LEU-1034</scope>
</reference>
<reference key="11">
    <citation type="journal article" date="2000" name="Nat. Cell Biol.">
        <title>Activation of EphA2 kinase suppresses integrin function and causes focal-adhesion-kinase dephosphorylation.</title>
        <authorList>
            <person name="Miao H."/>
            <person name="Burnett E."/>
            <person name="Kinch M."/>
            <person name="Simon E."/>
            <person name="Wang B."/>
        </authorList>
    </citation>
    <scope>FUNCTION IN PXN PHOSPHORYLATION; REGULATION OF CELL SHAPE AND MIGRATION</scope>
    <scope>INTERACTION WITH EPHA2</scope>
    <scope>AUTOPHOSPHORYLATION</scope>
    <scope>CATALYTIC ACTIVITY</scope>
    <scope>ACTIVITY REGULATION</scope>
    <scope>DEPHOSPHORYLATION BY PTPN11</scope>
    <scope>SUBCELLULAR LOCATION</scope>
</reference>
<reference key="12">
    <citation type="journal article" date="2001" name="Nat. Cell Biol.">
        <title>Regulation of the PH-domain-containing tyrosine kinase Etk by focal adhesion kinase through the FERM domain.</title>
        <authorList>
            <person name="Chen R."/>
            <person name="Kim O."/>
            <person name="Li M."/>
            <person name="Xiong X."/>
            <person name="Guan J.L."/>
            <person name="Kung H.J."/>
            <person name="Chen H."/>
            <person name="Shimizu Y."/>
            <person name="Qiu Y."/>
        </authorList>
    </citation>
    <scope>FUNCTION IN CELL MIGRATION AND ACTIVATION OF BMX</scope>
    <scope>CATALYTIC ACTIVITY</scope>
    <scope>AUTOPHOSPHORYLATION</scope>
    <scope>MUTAGENESIS OF TYR-397</scope>
    <scope>INTERACTION WITH BMX</scope>
</reference>
<reference key="13">
    <citation type="journal article" date="2002" name="Cancer Res.">
        <title>Focal adhesion kinase enhances signaling through the Shc/extracellular signal-regulated kinase pathway in anaplastic astrocytoma tumor biopsy samples.</title>
        <authorList>
            <person name="Hecker T.P."/>
            <person name="Grammer J.R."/>
            <person name="Gillespie G.Y."/>
            <person name="Stewart J. Jr."/>
            <person name="Gladson C.L."/>
        </authorList>
    </citation>
    <scope>FUNCTION IN PHOSPHORYLATION OF SHC1</scope>
    <scope>AUTOPHOSPHORYLATION</scope>
    <scope>INTERACTION WITH SHC1 AND SRC</scope>
    <scope>ROLE IN DISEASE</scope>
</reference>
<reference key="14">
    <citation type="journal article" date="2002" name="Mol. Biol. Cell">
        <title>Regulation of focal adhesion kinase by a novel protein inhibitor FIP200.</title>
        <authorList>
            <person name="Abbi S."/>
            <person name="Ueda H."/>
            <person name="Zheng C."/>
            <person name="Cooper L.A."/>
            <person name="Zhao J."/>
            <person name="Christopher R."/>
            <person name="Guan J.L."/>
        </authorList>
    </citation>
    <scope>INTERACTION WITH RB1CC1</scope>
</reference>
<reference key="15">
    <citation type="journal article" date="2003" name="Biochem. J.">
        <title>Site-specific phosphorylation of platelet focal adhesion kinase by low-density lipoprotein.</title>
        <authorList>
            <person name="Relou I.A.M."/>
            <person name="Bax L.A.B."/>
            <person name="Van Rijn H.J.M."/>
            <person name="Akkerman J.-W.N."/>
        </authorList>
    </citation>
    <scope>PHOSPHORYLATION AT TYR-397; TYR-407; TYR-577; TYR-861 AND TYR-925</scope>
    <scope>INTERACTION WITH FGR</scope>
</reference>
<reference key="16">
    <citation type="journal article" date="2004" name="J. Biol. Chem.">
        <title>Focal adhesion kinase is upstream of phosphatidylinositol 3-kinase/Akt in regulating fibroblast survival in response to contraction of type I collagen matrices via a beta 1 integrin viability signaling pathway.</title>
        <authorList>
            <person name="Xia H."/>
            <person name="Nho R.S."/>
            <person name="Kahm J."/>
            <person name="Kleidon J."/>
            <person name="Henke C.A."/>
        </authorList>
    </citation>
    <scope>FUNCTION IN INTEGRIN SIGNALING; REGULATION OF APOPTOSIS; REGULATION OF CELL SHAPE AND ACTIVATION OF PHOSPHATIDYLINOSITOL KINASE AND AKT1 SIGNALING PATHWAY</scope>
</reference>
<reference key="17">
    <citation type="journal article" date="2005" name="Exp. Cell Res.">
        <title>The proto-oncogene Fgr regulates cell migration and this requires its plasma membrane localization.</title>
        <authorList>
            <person name="Continolo S."/>
            <person name="Baruzzi A."/>
            <person name="Majeed M."/>
            <person name="Caveggion E."/>
            <person name="Fumagalli L."/>
            <person name="Lowell C.A."/>
            <person name="Berton G."/>
        </authorList>
    </citation>
    <scope>FUNCTION IN REGULATION OF CELL MIGRATION</scope>
    <scope>PHOSPHORYLATION AT TYR-407; TYR-397 AND TYR-576</scope>
</reference>
<reference key="18">
    <citation type="journal article" date="2005" name="J. Biol. Chem.">
        <title>Direct interaction of the N-terminal domain of focal adhesion kinase with the N-terminal transactivation domain of p53.</title>
        <authorList>
            <person name="Golubovskaya V.M."/>
            <person name="Finch R."/>
            <person name="Cance W.G."/>
        </authorList>
    </citation>
    <scope>INTERACTION WITH P53/TP53</scope>
    <scope>SUBCELLULAR LOCATION</scope>
</reference>
<reference key="19">
    <citation type="journal article" date="2005" name="Nat. Cell Biol.">
        <title>Microtubule-induced focal adhesion disassembly is mediated by dynamin and focal adhesion kinase.</title>
        <authorList>
            <person name="Ezratty E.J."/>
            <person name="Partridge M.A."/>
            <person name="Gundersen G.G."/>
        </authorList>
    </citation>
    <scope>FUNCTION IN FOCAL ADHESION DISASSEMBLY</scope>
</reference>
<reference key="20">
    <citation type="journal article" date="2006" name="Cancer Res.">
        <title>Vascular endothelial growth factor receptor-3 and focal adhesion kinase bind and suppress apoptosis in breast cancer cells.</title>
        <authorList>
            <person name="Garces C.A."/>
            <person name="Kurenova E.V."/>
            <person name="Golubovskaya V.M."/>
            <person name="Cance W.G."/>
        </authorList>
    </citation>
    <scope>INTERACTION WITH FLT4</scope>
</reference>
<reference key="21">
    <citation type="journal article" date="2006" name="Cell">
        <title>Global, in vivo, and site-specific phosphorylation dynamics in signaling networks.</title>
        <authorList>
            <person name="Olsen J.V."/>
            <person name="Blagoev B."/>
            <person name="Gnad F."/>
            <person name="Macek B."/>
            <person name="Kumar C."/>
            <person name="Mortensen P."/>
            <person name="Mann M."/>
        </authorList>
    </citation>
    <scope>IDENTIFICATION BY MASS SPECTROMETRY [LARGE SCALE ANALYSIS]</scope>
    <source>
        <tissue>Cervix carcinoma</tissue>
    </source>
</reference>
<reference key="22">
    <citation type="journal article" date="2006" name="Med. Mol. Morphol.">
        <title>Expression of FAK-related non-kinase (FRNK) coincides with morphological change in the early stage of cell adhesion.</title>
        <authorList>
            <person name="Nagoshi Y."/>
            <person name="Yamamoto G."/>
            <person name="Irie T."/>
            <person name="Tachikawa T."/>
        </authorList>
    </citation>
    <scope>ALTERNATIVE PROMOTER USAGE</scope>
    <scope>IDENTIFICATION OF ISOFORM 6</scope>
    <scope>DEVELOPMENTAL STAGE (ISOFORM 6)</scope>
</reference>
<reference key="23">
    <citation type="journal article" date="2006" name="Nat. Biotechnol.">
        <title>A probability-based approach for high-throughput protein phosphorylation analysis and site localization.</title>
        <authorList>
            <person name="Beausoleil S.A."/>
            <person name="Villen J."/>
            <person name="Gerber S.A."/>
            <person name="Rush J."/>
            <person name="Gygi S.P."/>
        </authorList>
    </citation>
    <scope>IDENTIFICATION BY MASS SPECTROMETRY [LARGE SCALE ANALYSIS]</scope>
    <source>
        <tissue>Cervix carcinoma</tissue>
    </source>
</reference>
<reference key="24">
    <citation type="journal article" date="2007" name="Cancer Res.">
        <title>Therapeutic efficacy of a novel focal adhesion kinase inhibitor TAE226 in ovarian carcinoma.</title>
        <authorList>
            <person name="Halder J."/>
            <person name="Lin Y.G."/>
            <person name="Merritt W.M."/>
            <person name="Spannuth W.A."/>
            <person name="Nick A.M."/>
            <person name="Honda T."/>
            <person name="Kamat A.A."/>
            <person name="Han L.Y."/>
            <person name="Kim T.J."/>
            <person name="Lu C."/>
            <person name="Tari A.M."/>
            <person name="Bornmann W."/>
            <person name="Fernandez A."/>
            <person name="Lopez-Berestein G."/>
            <person name="Sood A.K."/>
        </authorList>
    </citation>
    <scope>ACTIVITY REGULATION</scope>
    <scope>ROLE IN DISEASE</scope>
    <scope>PHOSPHORYLATION AT TYR-397 AND TYR-861</scope>
</reference>
<reference key="25">
    <citation type="journal article" date="2007" name="J. Biol. Chem.">
        <title>Cellular characterization of a novel focal adhesion kinase inhibitor.</title>
        <authorList>
            <person name="Slack-Davis J.K."/>
            <person name="Martin K.H."/>
            <person name="Tilghman R.W."/>
            <person name="Iwanicki M."/>
            <person name="Ung E.J."/>
            <person name="Autry C."/>
            <person name="Luzzio M.J."/>
            <person name="Cooper B."/>
            <person name="Kath J.C."/>
            <person name="Roberts W.G."/>
            <person name="Parsons J.T."/>
        </authorList>
    </citation>
    <scope>FUNCTION</scope>
    <scope>ACTIVITY REGULATION</scope>
    <scope>ROLE IN DISEASE</scope>
    <scope>PHOSPHORYLATION AT TYR-397</scope>
</reference>
<reference key="26">
    <citation type="journal article" date="2007" name="J. Cell. Biochem.">
        <title>Activation of FAK is necessary for the osteogenic differentiation of human mesenchymal stem cells on laminin-5.</title>
        <authorList>
            <person name="Salasznyk R.M."/>
            <person name="Klees R.F."/>
            <person name="Boskey A."/>
            <person name="Plopper G.E."/>
        </authorList>
    </citation>
    <scope>FUNCTION IN OSTEOBLAST DIFFERENTIATION</scope>
</reference>
<reference key="27">
    <citation type="journal article" date="2007" name="Mol. Cancer Ther.">
        <title>Inhibition of both focal adhesion kinase and insulin-like growth factor-I receptor kinase suppresses glioma proliferation in vitro and in vivo.</title>
        <authorList>
            <person name="Liu T.J."/>
            <person name="LaFortune T."/>
            <person name="Honda T."/>
            <person name="Ohmori O."/>
            <person name="Hatakeyama S."/>
            <person name="Meyer T."/>
            <person name="Jackson D."/>
            <person name="de Groot J."/>
            <person name="Yung W.K."/>
        </authorList>
    </citation>
    <scope>FUNCTION</scope>
    <scope>ACTIVITY REGULATION</scope>
    <scope>ROLE IN DISEASE</scope>
    <scope>PHOSPHORYLATION AT TYR-397</scope>
</reference>
<reference key="28">
    <citation type="journal article" date="2008" name="Circ. Res.">
        <title>The LIM protein leupaxin is enriched in smooth muscle and functions as an serum response factor cofactor to induce smooth muscle cell gene transcription.</title>
        <authorList>
            <person name="Sundberg-Smith L.J."/>
            <person name="DiMichele L.A."/>
            <person name="Sayers R.L."/>
            <person name="Mack C.P."/>
            <person name="Taylor J.M."/>
        </authorList>
    </citation>
    <scope>FUNCTION</scope>
    <scope>INTERACTION WITH LPXN</scope>
</reference>
<reference key="29">
    <citation type="journal article" date="2008" name="J. Immunol.">
        <title>Etk/BMX, a Btk family tyrosine kinase, and Mal contribute to the cross-talk between MyD88 and FAK pathways.</title>
        <authorList>
            <person name="Semaan N."/>
            <person name="Alsaleh G."/>
            <person name="Gottenberg J.E."/>
            <person name="Wachsmann D."/>
            <person name="Sibilia J."/>
        </authorList>
    </citation>
    <scope>FUNCTION</scope>
    <scope>INTERACTION WITH BMX</scope>
</reference>
<reference key="30">
    <citation type="journal article" date="2008" name="Mol. Biol. Cell">
        <title>A novel Cas family member, HEPL, regulates FAK and cell spreading.</title>
        <authorList>
            <person name="Singh M.K."/>
            <person name="Dadke D."/>
            <person name="Nicolas E."/>
            <person name="Serebriiskii I.G."/>
            <person name="Apostolou S."/>
            <person name="Canutescu A."/>
            <person name="Egleston B.L."/>
            <person name="Golemis E.A."/>
        </authorList>
    </citation>
    <scope>FUNCTION</scope>
    <scope>SUBCELLULAR LOCATION</scope>
    <scope>INTERACTION WITH CASS4</scope>
</reference>
<reference key="31">
    <citation type="journal article" date="2008" name="Mol. Cell">
        <title>Nuclear FAK promotes cell proliferation and survival through FERM-enhanced p53 degradation.</title>
        <authorList>
            <person name="Lim S.T."/>
            <person name="Chen X.L."/>
            <person name="Lim Y."/>
            <person name="Hanson D.A."/>
            <person name="Vo T.T."/>
            <person name="Howerton K."/>
            <person name="Larocque N."/>
            <person name="Fisher S.J."/>
            <person name="Schlaepfer D.D."/>
            <person name="Ilic D."/>
        </authorList>
    </citation>
    <scope>FUNCTION IN REGULATION OF P53/TP53 LEVELS; CELL PROLIFERATION AND CELL SURVIVAL</scope>
    <scope>SUBCELLULAR LOCATION</scope>
</reference>
<reference key="32">
    <citation type="journal article" date="2008" name="Mol. Cell">
        <title>Regulation of estrogen rapid signaling through arginine methylation by PRMT1.</title>
        <authorList>
            <person name="Le Romancer M."/>
            <person name="Treilleux I."/>
            <person name="Leconte N."/>
            <person name="Robin-Lespinasse Y."/>
            <person name="Sentis S."/>
            <person name="Bouchekioua-Bouzaghou K."/>
            <person name="Goddard S."/>
            <person name="Gobert-Gosse S."/>
            <person name="Corbo L."/>
        </authorList>
    </citation>
    <scope>INTERACTION WITH ESR1; PIK3R1 AND/OR PIK3R2 AND SRC</scope>
</reference>
<reference key="33">
    <citation type="journal article" date="2008" name="Mol. Cell">
        <title>Kinase-selective enrichment enables quantitative phosphoproteomics of the kinome across the cell cycle.</title>
        <authorList>
            <person name="Daub H."/>
            <person name="Olsen J.V."/>
            <person name="Bairlein M."/>
            <person name="Gnad F."/>
            <person name="Oppermann F.S."/>
            <person name="Korner R."/>
            <person name="Greff Z."/>
            <person name="Keri G."/>
            <person name="Stemmann O."/>
            <person name="Mann M."/>
        </authorList>
    </citation>
    <scope>PHOSPHORYLATION [LARGE SCALE ANALYSIS] AT THR-13; SER-29; SER-887 AND SER-910</scope>
    <scope>IDENTIFICATION BY MASS SPECTROMETRY [LARGE SCALE ANALYSIS]</scope>
    <source>
        <tissue>Cervix carcinoma</tissue>
    </source>
</reference>
<reference key="34">
    <citation type="journal article" date="2008" name="Proc. Natl. Acad. Sci. U.S.A.">
        <title>A quantitative atlas of mitotic phosphorylation.</title>
        <authorList>
            <person name="Dephoure N."/>
            <person name="Zhou C."/>
            <person name="Villen J."/>
            <person name="Beausoleil S.A."/>
            <person name="Bakalarski C.E."/>
            <person name="Elledge S.J."/>
            <person name="Gygi S.P."/>
        </authorList>
    </citation>
    <scope>PHOSPHORYLATION [LARGE SCALE ANALYSIS] AT SER-910</scope>
    <scope>IDENTIFICATION BY MASS SPECTROMETRY [LARGE SCALE ANALYSIS]</scope>
    <source>
        <tissue>Cervix carcinoma</tissue>
    </source>
</reference>
<reference key="35">
    <citation type="journal article" date="2009" name="Anal. Chem.">
        <title>Lys-N and trypsin cover complementary parts of the phosphoproteome in a refined SCX-based approach.</title>
        <authorList>
            <person name="Gauci S."/>
            <person name="Helbig A.O."/>
            <person name="Slijper M."/>
            <person name="Krijgsveld J."/>
            <person name="Heck A.J."/>
            <person name="Mohammed S."/>
        </authorList>
    </citation>
    <scope>ACETYLATION [LARGE SCALE ANALYSIS] AT ALA-2</scope>
    <scope>CLEAVAGE OF INITIATOR METHIONINE [LARGE SCALE ANALYSIS]</scope>
    <scope>IDENTIFICATION BY MASS SPECTROMETRY [LARGE SCALE ANALYSIS]</scope>
</reference>
<reference key="36">
    <citation type="journal article" date="2009" name="Biochim. Biophys. Acta">
        <title>Specific tyrosine phosphorylation of focal adhesion kinase mediated by Fer tyrosine kinase in suspended hepatocytes.</title>
        <authorList>
            <person name="Oh M.A."/>
            <person name="Choi S."/>
            <person name="Lee M.J."/>
            <person name="Choi M.C."/>
            <person name="Lee S.A."/>
            <person name="Ko W."/>
            <person name="Cance W.G."/>
            <person name="Oh E.S."/>
            <person name="Buday L."/>
            <person name="Kim S.H."/>
            <person name="Lee J.W."/>
        </authorList>
    </citation>
    <scope>PHOSPHORYLATION AT TYR-397; TYR-576; TYR-577; SER-722; TYR-861 AND TYR-925</scope>
    <scope>IDENTIFICATION IN A COMPLEX WITH CTTN AND FER</scope>
</reference>
<reference key="37">
    <citation type="journal article" date="2009" name="BMC Cancer">
        <title>Paxillin-Y118 phosphorylation contributes to the control of Src-induced anchorage-independent growth by FAK and adhesion.</title>
        <authorList>
            <person name="Sachdev S."/>
            <person name="Bu Y."/>
            <person name="Gelman I.H."/>
        </authorList>
    </citation>
    <scope>FUNCTION IN SRC-MEDIATED PHOSPHORYLATION OF PXN</scope>
</reference>
<reference key="38">
    <citation type="journal article" date="2009" name="Int. J. Mol. Med.">
        <title>STEAP4 regulates focal adhesion kinase activation and CpG motifs within STEAP4 promoter region are frequently methylated in DU145, human androgen-independent prostate cancer cells.</title>
        <authorList>
            <person name="Tamura T."/>
            <person name="Chiba J."/>
        </authorList>
    </citation>
    <scope>INTERACTION WITH STEAP4</scope>
</reference>
<reference key="39">
    <citation type="journal article" date="2009" name="Invest. Ophthalmol. Vis. Sci.">
        <title>Functional consequences of interactions between FAK and epithelial membrane protein 2 (EMP2).</title>
        <authorList>
            <person name="Morales S.A."/>
            <person name="Mareninov S."/>
            <person name="Coulam P."/>
            <person name="Wadehra M."/>
            <person name="Goodglick L."/>
            <person name="Braun J."/>
            <person name="Gordon L.K."/>
        </authorList>
    </citation>
    <scope>INTERACTION WITH EMP2</scope>
</reference>
<reference key="40">
    <citation type="journal article" date="2009" name="J. Clin. Invest.">
        <title>Ras- and PI3K-dependent breast tumorigenesis in mice and humans requires focal adhesion kinase signaling.</title>
        <authorList>
            <person name="Pylayeva Y."/>
            <person name="Gillen K.M."/>
            <person name="Gerald W."/>
            <person name="Beggs H.E."/>
            <person name="Reichardt L.F."/>
            <person name="Giancotti F.G."/>
        </authorList>
    </citation>
    <scope>FUNCTION IN SRC-MEDIATED PHOSPHORYLATION OF BCAR1</scope>
    <scope>ROLE IN DISEASE</scope>
</reference>
<reference key="41">
    <citation type="journal article" date="2009" name="J. Cell Sci.">
        <title>EphA1 interacts with integrin-linked kinase and regulates cell morphology and motility.</title>
        <authorList>
            <person name="Yamazaki T."/>
            <person name="Masuda J."/>
            <person name="Omori T."/>
            <person name="Usui R."/>
            <person name="Akiyama H."/>
            <person name="Maru Y."/>
        </authorList>
    </citation>
    <scope>INTERACTION WITH EPHA1</scope>
</reference>
<reference key="42">
    <citation type="journal article" date="2009" name="Mol. Cell. Proteomics">
        <title>Large-scale proteomics analysis of the human kinome.</title>
        <authorList>
            <person name="Oppermann F.S."/>
            <person name="Gnad F."/>
            <person name="Olsen J.V."/>
            <person name="Hornberger R."/>
            <person name="Greff Z."/>
            <person name="Keri G."/>
            <person name="Mann M."/>
            <person name="Daub H."/>
        </authorList>
    </citation>
    <scope>ACETYLATION [LARGE SCALE ANALYSIS] AT ALA-2</scope>
    <scope>PHOSPHORYLATION [LARGE SCALE ANALYSIS] AT TYR-5; THR-13; SER-29; TYR-397; TYR-570; SER-580 AND SER-910</scope>
    <scope>CLEAVAGE OF INITIATOR METHIONINE [LARGE SCALE ANALYSIS]</scope>
    <scope>IDENTIFICATION BY MASS SPECTROMETRY [LARGE SCALE ANALYSIS]</scope>
</reference>
<reference key="43">
    <citation type="journal article" date="2010" name="Cancer Biol. Ther.">
        <title>Bioluminescent imaging study: FAK inhibitor, PF-562,271, preclinical study in PC3M-luc-C6 local implant and metastasis xenograft models.</title>
        <authorList>
            <person name="Sun H."/>
            <person name="Pisle S."/>
            <person name="Gardner E.R."/>
            <person name="Figg W.D."/>
        </authorList>
    </citation>
    <scope>ROLE IN DISEASE</scope>
    <scope>ACTIVITY REGULATION</scope>
</reference>
<reference key="44">
    <citation type="journal article" date="2010" name="Cancer Sci.">
        <title>LIM domain-containing adaptor, leupaxin, localizes in focal adhesion and suppresses the integrin-induced tyrosine phosphorylation of paxillin.</title>
        <authorList>
            <person name="Tanaka T."/>
            <person name="Moriwaki K."/>
            <person name="Murata S."/>
            <person name="Miyasaka M."/>
        </authorList>
    </citation>
    <scope>INTERACTION WITH LPXN</scope>
</reference>
<reference key="45">
    <citation type="journal article" date="2010" name="Exp. Cell Res.">
        <title>Downregulation of FAK-related non-kinase mediates the migratory phenotype of human fibrotic lung fibroblasts.</title>
        <authorList>
            <person name="Cai G.Q."/>
            <person name="Zheng A."/>
            <person name="Tang Q."/>
            <person name="White E.S."/>
            <person name="Chou C.F."/>
            <person name="Gladson C.L."/>
            <person name="Olman M.A."/>
            <person name="Ding Q."/>
        </authorList>
    </citation>
    <scope>FUNCTION (ISOFORM 6)</scope>
    <scope>TISSUE SPECIFICITY</scope>
</reference>
<reference key="46">
    <citation type="journal article" date="2010" name="J. Biol. Chem.">
        <title>ZF21 protein regulates cell adhesion and motility.</title>
        <authorList>
            <person name="Nagano M."/>
            <person name="Hoshino D."/>
            <person name="Sakamoto T."/>
            <person name="Kawasaki N."/>
            <person name="Koshikawa N."/>
            <person name="Seiki M."/>
        </authorList>
    </citation>
    <scope>INTERACTION WITH ZFYVE21</scope>
    <scope>DEPHOSPHORYLATION AT TYR-397</scope>
</reference>
<reference key="47">
    <citation type="journal article" date="2010" name="Mol. Cell. Proteomics">
        <title>Comprehensive analysis of phosphorylation sites in Tensin1 reveals regulation by p38MAPK.</title>
        <authorList>
            <person name="Hall E.H."/>
            <person name="Balsbaugh J.L."/>
            <person name="Rose K.L."/>
            <person name="Shabanowitz J."/>
            <person name="Hunt D.F."/>
            <person name="Brautigan D.L."/>
        </authorList>
    </citation>
    <scope>INTERACTION WITH TNS1</scope>
</reference>
<reference key="48">
    <citation type="journal article" date="2010" name="Nat. Immunol.">
        <title>CD36 ligands promote sterile inflammation through assembly of a Toll-like receptor 4 and 6 heterodimer.</title>
        <authorList>
            <person name="Stewart C.R."/>
            <person name="Stuart L.M."/>
            <person name="Wilkinson K."/>
            <person name="van Gils J.M."/>
            <person name="Deng J."/>
            <person name="Halle A."/>
            <person name="Rayner K.J."/>
            <person name="Boyer L."/>
            <person name="Zhong R."/>
            <person name="Frazier W.A."/>
            <person name="Lacy-Hulbert A."/>
            <person name="El Khoury J."/>
            <person name="Golenbock D.T."/>
            <person name="Moore K.J."/>
        </authorList>
    </citation>
    <scope>INTERACTION WITH CD36</scope>
</reference>
<reference key="49">
    <citation type="journal article" date="2010" name="Sci. Signal.">
        <title>Quantitative phosphoproteomics reveals widespread full phosphorylation site occupancy during mitosis.</title>
        <authorList>
            <person name="Olsen J.V."/>
            <person name="Vermeulen M."/>
            <person name="Santamaria A."/>
            <person name="Kumar C."/>
            <person name="Miller M.L."/>
            <person name="Jensen L.J."/>
            <person name="Gnad F."/>
            <person name="Cox J."/>
            <person name="Jensen T.S."/>
            <person name="Nigg E.A."/>
            <person name="Brunak S."/>
            <person name="Mann M."/>
        </authorList>
    </citation>
    <scope>PHOSPHORYLATION [LARGE SCALE ANALYSIS] AT SER-910 AND THR-914</scope>
    <scope>IDENTIFICATION BY MASS SPECTROMETRY [LARGE SCALE ANALYSIS]</scope>
    <source>
        <tissue>Cervix carcinoma</tissue>
    </source>
</reference>
<reference key="50">
    <citation type="journal article" date="2011" name="BMC Syst. Biol.">
        <title>Initial characterization of the human central proteome.</title>
        <authorList>
            <person name="Burkard T.R."/>
            <person name="Planyavsky M."/>
            <person name="Kaupe I."/>
            <person name="Breitwieser F.P."/>
            <person name="Buerckstuemmer T."/>
            <person name="Bennett K.L."/>
            <person name="Superti-Furga G."/>
            <person name="Colinge J."/>
        </authorList>
    </citation>
    <scope>IDENTIFICATION BY MASS SPECTROMETRY [LARGE SCALE ANALYSIS]</scope>
</reference>
<reference key="51">
    <citation type="journal article" date="2011" name="J. Biol. Chem.">
        <title>Focal adhesion kinase (FAK) binds RET kinase via its FERM domain, priming a direct and reciprocal RET-FAK transactivation mechanism.</title>
        <authorList>
            <person name="Plaza-Menacho I."/>
            <person name="Morandi A."/>
            <person name="Mologni L."/>
            <person name="Boender P."/>
            <person name="Gambacorti-Passerini C."/>
            <person name="Magee A.I."/>
            <person name="Hofstra R.M.W."/>
            <person name="Knowles P."/>
            <person name="McDonald N.Q."/>
            <person name="Isacke C.M."/>
        </authorList>
    </citation>
    <scope>INTERACTION WITH RET</scope>
    <scope>FUNCTION IN RET PHOSPHORYLATION</scope>
    <scope>PHOSPHORYLATION AT TYR-576 AND TYR-577</scope>
</reference>
<reference key="52">
    <citation type="journal article" date="2013" name="J. Proteome Res.">
        <title>Toward a comprehensive characterization of a human cancer cell phosphoproteome.</title>
        <authorList>
            <person name="Zhou H."/>
            <person name="Di Palma S."/>
            <person name="Preisinger C."/>
            <person name="Peng M."/>
            <person name="Polat A.N."/>
            <person name="Heck A.J."/>
            <person name="Mohammed S."/>
        </authorList>
    </citation>
    <scope>PHOSPHORYLATION [LARGE SCALE ANALYSIS] AT THR-13; SER-29; SER-843 AND SER-910</scope>
    <scope>IDENTIFICATION BY MASS SPECTROMETRY [LARGE SCALE ANALYSIS]</scope>
    <source>
        <tissue>Cervix carcinoma</tissue>
        <tissue>Erythroleukemia</tissue>
    </source>
</reference>
<reference key="53">
    <citation type="journal article" date="2014" name="Oncogene">
        <title>A novel splice variant of calcium and integrin-binding protein 1 mediates protein kinase D2-stimulated tumour growth by regulating angiogenesis.</title>
        <authorList>
            <person name="Armacki M."/>
            <person name="Joodi G."/>
            <person name="Nimmagadda S.C."/>
            <person name="de Kimpe L."/>
            <person name="Pusapati G.V."/>
            <person name="Vandoninck S."/>
            <person name="Van Lint J."/>
            <person name="Illing A."/>
            <person name="Seufferlein T."/>
        </authorList>
    </citation>
    <scope>INTERACTION WITH CIB1 ISOFORM 2</scope>
    <source>
        <tissue>Brain</tissue>
    </source>
</reference>
<reference key="54">
    <citation type="journal article" date="1999" name="Prog. Biophys. Mol. Biol.">
        <title>Signaling through focal adhesion kinase.</title>
        <authorList>
            <person name="Schlaepfer D.D."/>
            <person name="Hauck C.R."/>
            <person name="Sieg D.J."/>
        </authorList>
    </citation>
    <scope>REVIEW ON SIGNALING AND ON DIRECT PTK2/FAK1 SUBSTRATES</scope>
</reference>
<reference key="55">
    <citation type="journal article" date="2005" name="Cell Cycle">
        <title>Netrin-integrin signaling in epithelial morphogenesis, axon guidance and vascular patterning.</title>
        <authorList>
            <person name="Nikolopoulos S.N."/>
            <person name="Giancotti F.G."/>
        </authorList>
    </citation>
    <scope>REVIEW ON FUNCTION IN NETRIN SIGNALING</scope>
</reference>
<reference key="56">
    <citation type="journal article" date="2006" name="Curr. Opin. Cell Biol.">
        <title>Integrin-regulated FAK-Src signaling in normal and cancer cells.</title>
        <authorList>
            <person name="Mitra S.K."/>
            <person name="Schlaepfer D.D."/>
        </authorList>
    </citation>
    <scope>REVIEW ON FUNCTION IN CELL MIGRATION; FOCAL ADHESION TURNOVER AND ACTIVATION OF SIGNALING PATHWAYS</scope>
    <scope>ROLE IN DISEASE</scope>
</reference>
<reference key="57">
    <citation type="journal article" date="2007" name="IUBMB Life">
        <title>Focal adhesion kinase: an essential kinase in the regulation of cardiovascular functions.</title>
        <authorList>
            <person name="Vadali K."/>
            <person name="Cai X."/>
            <person name="Schaller M.D."/>
        </authorList>
    </citation>
    <scope>FUNCTION</scope>
</reference>
<reference key="58">
    <citation type="journal article" date="2008" name="Cell Cycle">
        <title>FERM control of FAK function: implications for cancer therapy.</title>
        <authorList>
            <person name="Lim S.T."/>
            <person name="Mikolon D."/>
            <person name="Stupack D.G."/>
            <person name="Schlaepfer D.D."/>
        </authorList>
    </citation>
    <scope>REVIEW ON ROLE IN INTEGRIN SIGNALING AND IN REGULATION OF P53/TP53 ACTIVITIES</scope>
    <scope>ROLE IN DISEASE</scope>
    <scope>ACTIVITY REGULATION</scope>
</reference>
<reference key="59">
    <citation type="journal article" date="2009" name="Curr. Opin. Cell Biol.">
        <title>Focal adhesion kinase: switching between GAPs and GEFs in the regulation of cell motility.</title>
        <authorList>
            <person name="Tomar A."/>
            <person name="Schlaepfer D.D."/>
        </authorList>
    </citation>
    <scope>REVIEW ON FUNCTION IN REGULATION OF RHO FAMILY GTPASE ACTIVITY</scope>
</reference>
<reference key="60">
    <citation type="journal article" date="2009" name="Histol. Histopathol.">
        <title>Focal adhesion kinase and cancer.</title>
        <authorList>
            <person name="Golubovskaya V.M."/>
            <person name="Kweh F.A."/>
            <person name="Cance W.G."/>
        </authorList>
    </citation>
    <scope>REVIEW ON EXPRESSION IN CANCER</scope>
    <scope>ROLE IN DISEASE</scope>
</reference>
<reference key="61">
    <citation type="journal article" date="2010" name="Front. Biosci.">
        <title>Focal adhesion kinase and p53 signal transduction pathways in cancer.</title>
        <authorList>
            <person name="Golubovskaya V.M."/>
            <person name="Cance W."/>
        </authorList>
    </citation>
    <scope>REVIEW ON FUNCTION IN REGULATION OF P53/TP53</scope>
</reference>
<reference key="62">
    <citation type="journal article" date="2010" name="Histol. Histopathol.">
        <title>The role of focal adhesion kinase in early development.</title>
        <authorList>
            <person name="Chatzizacharias N.A."/>
            <person name="Kouraklis G.P."/>
            <person name="Theocharis S.E."/>
        </authorList>
    </citation>
    <scope>REVIEW ON ROLE IN DEVELOPMENT</scope>
</reference>
<reference key="63">
    <citation type="journal article" date="2010" name="IUBMB Life">
        <title>Integrin signaling through FAK in the regulation of mammary stem cells and breast cancer.</title>
        <authorList>
            <person name="Guan J.L."/>
        </authorList>
    </citation>
    <scope>REVIEW ON FUNCTION IN INTEGRIN SIGNALING AND ACTIVATION OF DOWNSTREAM SIGNALING PATHWAYS</scope>
</reference>
<reference key="64">
    <citation type="journal article" date="2010" name="J. Cell Sci.">
        <title>Cellular functions of FAK kinases: insight into molecular mechanisms and novel functions.</title>
        <authorList>
            <person name="Schaller M.D."/>
        </authorList>
    </citation>
    <scope>FUNCTION</scope>
    <scope>SIGNALING</scope>
</reference>
<reference key="65">
    <citation type="journal article" date="2011" name="Int. Rev. Cell Mol. Biol.">
        <title>Focal adhesion kinase: exploring Fak structure to gain insight into function.</title>
        <authorList>
            <person name="Hall J.E."/>
            <person name="Fu W."/>
            <person name="Schaller M.D."/>
        </authorList>
    </citation>
    <scope>REVIEW ON FUNCTION; SUBUNIT; PHOSPHORYLATION; ACTIVITY REGULATION AND ROLE IN DISEASE</scope>
</reference>
<reference key="66">
    <citation type="journal article" date="2013" name="J. Cell Biol.">
        <title>MISP is a novel Plk1 substrate required for proper spindle orientation and mitotic progression.</title>
        <authorList>
            <person name="Zhu M."/>
            <person name="Settele F."/>
            <person name="Kotak S."/>
            <person name="Sanchez-Pulido L."/>
            <person name="Ehret L."/>
            <person name="Ponting C.P."/>
            <person name="Goenczy P."/>
            <person name="Hoffmann I."/>
        </authorList>
    </citation>
    <scope>INTERACTION WITH MISP</scope>
</reference>
<reference key="67">
    <citation type="journal article" date="2017" name="Cell. Physiol. Biochem.">
        <title>The Intracranial Aneurysm Gene THSD1 Connects Endosome Dynamics to Nascent Focal Adhesion Assembly.</title>
        <authorList>
            <person name="Rui Y.N."/>
            <person name="Xu Z."/>
            <person name="Fang X."/>
            <person name="Menezes M.R."/>
            <person name="Balzeau J."/>
            <person name="Niu A."/>
            <person name="Hagan J.P."/>
            <person name="Kim D.H."/>
        </authorList>
    </citation>
    <scope>SUBUNIT</scope>
</reference>
<reference key="68">
    <citation type="journal article" date="2019" name="Am. J. Hum. Genet.">
        <title>De Novo Mutations in FOXJ1 Result in a Motile Ciliopathy with Hydrocephalus and Randomization of Left/Right Body Asymmetry.</title>
        <authorList>
            <person name="Wallmeier J."/>
            <person name="Frank D."/>
            <person name="Shoemark A."/>
            <person name="Noethe-Menchen T."/>
            <person name="Cindric S."/>
            <person name="Olbrich H."/>
            <person name="Loges N.T."/>
            <person name="Aprea I."/>
            <person name="Dougherty G.W."/>
            <person name="Pennekamp P."/>
            <person name="Kaiser T."/>
            <person name="Mitchison H.M."/>
            <person name="Hogg C."/>
            <person name="Carr S.B."/>
            <person name="Zariwala M.A."/>
            <person name="Ferkol T."/>
            <person name="Leigh M.W."/>
            <person name="Davis S.D."/>
            <person name="Atkinson J."/>
            <person name="Dutcher S.K."/>
            <person name="Knowles M.R."/>
            <person name="Thiele H."/>
            <person name="Altmueller J."/>
            <person name="Krenz H."/>
            <person name="Woeste M."/>
            <person name="Brentrup A."/>
            <person name="Ahrens F."/>
            <person name="Vogelberg C."/>
            <person name="Morris-Rosendahl D.J."/>
            <person name="Omran H."/>
        </authorList>
    </citation>
    <scope>SUBCELLULAR LOCATION</scope>
    <scope>TISSUE SPECIFICITY</scope>
</reference>
<reference key="69">
    <citation type="journal article" date="2002" name="Structure">
        <title>The structural basis of localization and signaling by the focal adhesion targeting domain.</title>
        <authorList>
            <person name="Arold S.T."/>
            <person name="Hoellerer M.K."/>
            <person name="Noble M.E."/>
        </authorList>
    </citation>
    <scope>X-RAY CRYSTALLOGRAPHY (1.95 ANGSTROMS) OF 891-1052</scope>
    <scope>IDENTIFICATION BY MASS SPECTROMETRY</scope>
</reference>
<reference key="70">
    <citation type="journal article" date="2002" name="Structure">
        <title>Structures of the cancer-related Aurora-A, FAK, and EphA2 protein kinases from nanovolume crystallography.</title>
        <authorList>
            <person name="Nowakowski J."/>
            <person name="Cronin C.N."/>
            <person name="McRee D.E."/>
            <person name="Knuth M.W."/>
            <person name="Nelson C.G."/>
            <person name="Pavletich N.P."/>
            <person name="Rogers J."/>
            <person name="Sang B.C."/>
            <person name="Scheibe D.N."/>
            <person name="Swanson R.V."/>
            <person name="Thompson D.A."/>
        </authorList>
    </citation>
    <scope>X-RAY CRYSTALLOGRAPHY (1.60 ANGSTROMS) OF 411-686 IN COMPLEX WITH ATP</scope>
</reference>
<reference key="71">
    <citation type="journal article" date="2003" name="Structure">
        <title>Molecular recognition of paxillin LD motifs by the focal adhesion targeting domain.</title>
        <authorList>
            <person name="Hoellerer M.K."/>
            <person name="Noble M.E."/>
            <person name="Labesse G."/>
            <person name="Campbell I.D."/>
            <person name="Werner J.M."/>
            <person name="Arold S.T."/>
        </authorList>
    </citation>
    <scope>X-RAY CRYSTALLOGRAPHY (2.35 ANGSTROMS) OF 892-1052 IN COMPLEX WITH PXN</scope>
    <scope>INTERACTION WITH PXN</scope>
</reference>
<reference key="72">
    <citation type="journal article" date="2008" name="Cancer Res.">
        <title>Antitumor activity and pharmacology of a selective focal adhesion kinase inhibitor, PF-562,271.</title>
        <authorList>
            <person name="Roberts W.G."/>
            <person name="Ung E."/>
            <person name="Whalen P."/>
            <person name="Cooper B."/>
            <person name="Hulford C."/>
            <person name="Autry C."/>
            <person name="Richter D."/>
            <person name="Emerson E."/>
            <person name="Lin J."/>
            <person name="Kath J."/>
            <person name="Coleman K."/>
            <person name="Yao L."/>
            <person name="Martinez-Alsina L."/>
            <person name="Lorenzen M."/>
            <person name="Berliner M."/>
            <person name="Luzzio M."/>
            <person name="Patel N."/>
            <person name="Schmitt E."/>
            <person name="LaGreca S."/>
            <person name="Jani J."/>
            <person name="Wessel M."/>
            <person name="Marr E."/>
            <person name="Griffor M."/>
            <person name="Vajdos F."/>
        </authorList>
    </citation>
    <scope>X-RAY CRYSTALLOGRAPHY (2.20 ANGSTROMS) OF 414-689 IN COMPLEX WITH INHIBITOR</scope>
    <scope>CATALYTIC ACTIVITY</scope>
    <scope>AUTOPHOSPHORYLATION</scope>
</reference>
<reference key="73">
    <citation type="journal article" date="2008" name="J. Mol. Biol.">
        <title>Structural basis for the interaction between focal adhesion kinase and CD4.</title>
        <authorList>
            <person name="Garron M.L."/>
            <person name="Arthos J."/>
            <person name="Guichou J.F."/>
            <person name="McNally J."/>
            <person name="Cicala C."/>
            <person name="Arold S.T."/>
        </authorList>
    </citation>
    <scope>X-RAY CRYSTALLOGRAPHY (2.82 ANGSTROMS) OF 891-1052 IN COMPLEX WITH CD4</scope>
    <scope>SUBCELLULAR LOCATION</scope>
    <scope>INTERACTION WITH CD4</scope>
</reference>
<reference key="74">
    <citation type="journal article" date="2007" name="Nature">
        <title>Patterns of somatic mutation in human cancer genomes.</title>
        <authorList>
            <person name="Greenman C."/>
            <person name="Stephens P."/>
            <person name="Smith R."/>
            <person name="Dalgliesh G.L."/>
            <person name="Hunter C."/>
            <person name="Bignell G."/>
            <person name="Davies H."/>
            <person name="Teague J."/>
            <person name="Butler A."/>
            <person name="Stevens C."/>
            <person name="Edkins S."/>
            <person name="O'Meara S."/>
            <person name="Vastrik I."/>
            <person name="Schmidt E.E."/>
            <person name="Avis T."/>
            <person name="Barthorpe S."/>
            <person name="Bhamra G."/>
            <person name="Buck G."/>
            <person name="Choudhury B."/>
            <person name="Clements J."/>
            <person name="Cole J."/>
            <person name="Dicks E."/>
            <person name="Forbes S."/>
            <person name="Gray K."/>
            <person name="Halliday K."/>
            <person name="Harrison R."/>
            <person name="Hills K."/>
            <person name="Hinton J."/>
            <person name="Jenkinson A."/>
            <person name="Jones D."/>
            <person name="Menzies A."/>
            <person name="Mironenko T."/>
            <person name="Perry J."/>
            <person name="Raine K."/>
            <person name="Richardson D."/>
            <person name="Shepherd R."/>
            <person name="Small A."/>
            <person name="Tofts C."/>
            <person name="Varian J."/>
            <person name="Webb T."/>
            <person name="West S."/>
            <person name="Widaa S."/>
            <person name="Yates A."/>
            <person name="Cahill D.P."/>
            <person name="Louis D.N."/>
            <person name="Goldstraw P."/>
            <person name="Nicholson A.G."/>
            <person name="Brasseur F."/>
            <person name="Looijenga L."/>
            <person name="Weber B.L."/>
            <person name="Chiew Y.-E."/>
            <person name="DeFazio A."/>
            <person name="Greaves M.F."/>
            <person name="Green A.R."/>
            <person name="Campbell P."/>
            <person name="Birney E."/>
            <person name="Easton D.F."/>
            <person name="Chenevix-Trench G."/>
            <person name="Tan M.-H."/>
            <person name="Khoo S.K."/>
            <person name="Teh B.T."/>
            <person name="Yuen S.T."/>
            <person name="Leung S.Y."/>
            <person name="Wooster R."/>
            <person name="Futreal P.A."/>
            <person name="Stratton M.R."/>
        </authorList>
    </citation>
    <scope>VARIANTS [LARGE SCALE ANALYSIS] PRO-292; GLN-292; ALA-793; GLU-1030 AND GLU-1044</scope>
</reference>
<gene>
    <name evidence="66" type="primary">PTK2</name>
    <name type="synonym">FAK</name>
    <name type="synonym">FAK1</name>
</gene>